<reference key="1">
    <citation type="submission" date="2000-09" db="EMBL/GenBank/DDBJ databases">
        <title>Identification of FKSG10, a novel gene related to breast cancer.</title>
        <authorList>
            <person name="Wang Y.-G."/>
        </authorList>
    </citation>
    <scope>NUCLEOTIDE SEQUENCE [MRNA]</scope>
</reference>
<reference key="2">
    <citation type="journal article" date="2004" name="Nat. Genet.">
        <title>Complete sequencing and characterization of 21,243 full-length human cDNAs.</title>
        <authorList>
            <person name="Ota T."/>
            <person name="Suzuki Y."/>
            <person name="Nishikawa T."/>
            <person name="Otsuki T."/>
            <person name="Sugiyama T."/>
            <person name="Irie R."/>
            <person name="Wakamatsu A."/>
            <person name="Hayashi K."/>
            <person name="Sato H."/>
            <person name="Nagai K."/>
            <person name="Kimura K."/>
            <person name="Makita H."/>
            <person name="Sekine M."/>
            <person name="Obayashi M."/>
            <person name="Nishi T."/>
            <person name="Shibahara T."/>
            <person name="Tanaka T."/>
            <person name="Ishii S."/>
            <person name="Yamamoto J."/>
            <person name="Saito K."/>
            <person name="Kawai Y."/>
            <person name="Isono Y."/>
            <person name="Nakamura Y."/>
            <person name="Nagahari K."/>
            <person name="Murakami K."/>
            <person name="Yasuda T."/>
            <person name="Iwayanagi T."/>
            <person name="Wagatsuma M."/>
            <person name="Shiratori A."/>
            <person name="Sudo H."/>
            <person name="Hosoiri T."/>
            <person name="Kaku Y."/>
            <person name="Kodaira H."/>
            <person name="Kondo H."/>
            <person name="Sugawara M."/>
            <person name="Takahashi M."/>
            <person name="Kanda K."/>
            <person name="Yokoi T."/>
            <person name="Furuya T."/>
            <person name="Kikkawa E."/>
            <person name="Omura Y."/>
            <person name="Abe K."/>
            <person name="Kamihara K."/>
            <person name="Katsuta N."/>
            <person name="Sato K."/>
            <person name="Tanikawa M."/>
            <person name="Yamazaki M."/>
            <person name="Ninomiya K."/>
            <person name="Ishibashi T."/>
            <person name="Yamashita H."/>
            <person name="Murakawa K."/>
            <person name="Fujimori K."/>
            <person name="Tanai H."/>
            <person name="Kimata M."/>
            <person name="Watanabe M."/>
            <person name="Hiraoka S."/>
            <person name="Chiba Y."/>
            <person name="Ishida S."/>
            <person name="Ono Y."/>
            <person name="Takiguchi S."/>
            <person name="Watanabe S."/>
            <person name="Yosida M."/>
            <person name="Hotuta T."/>
            <person name="Kusano J."/>
            <person name="Kanehori K."/>
            <person name="Takahashi-Fujii A."/>
            <person name="Hara H."/>
            <person name="Tanase T.-O."/>
            <person name="Nomura Y."/>
            <person name="Togiya S."/>
            <person name="Komai F."/>
            <person name="Hara R."/>
            <person name="Takeuchi K."/>
            <person name="Arita M."/>
            <person name="Imose N."/>
            <person name="Musashino K."/>
            <person name="Yuuki H."/>
            <person name="Oshima A."/>
            <person name="Sasaki N."/>
            <person name="Aotsuka S."/>
            <person name="Yoshikawa Y."/>
            <person name="Matsunawa H."/>
            <person name="Ichihara T."/>
            <person name="Shiohata N."/>
            <person name="Sano S."/>
            <person name="Moriya S."/>
            <person name="Momiyama H."/>
            <person name="Satoh N."/>
            <person name="Takami S."/>
            <person name="Terashima Y."/>
            <person name="Suzuki O."/>
            <person name="Nakagawa S."/>
            <person name="Senoh A."/>
            <person name="Mizoguchi H."/>
            <person name="Goto Y."/>
            <person name="Shimizu F."/>
            <person name="Wakebe H."/>
            <person name="Hishigaki H."/>
            <person name="Watanabe T."/>
            <person name="Sugiyama A."/>
            <person name="Takemoto M."/>
            <person name="Kawakami B."/>
            <person name="Yamazaki M."/>
            <person name="Watanabe K."/>
            <person name="Kumagai A."/>
            <person name="Itakura S."/>
            <person name="Fukuzumi Y."/>
            <person name="Fujimori Y."/>
            <person name="Komiyama M."/>
            <person name="Tashiro H."/>
            <person name="Tanigami A."/>
            <person name="Fujiwara T."/>
            <person name="Ono T."/>
            <person name="Yamada K."/>
            <person name="Fujii Y."/>
            <person name="Ozaki K."/>
            <person name="Hirao M."/>
            <person name="Ohmori Y."/>
            <person name="Kawabata A."/>
            <person name="Hikiji T."/>
            <person name="Kobatake N."/>
            <person name="Inagaki H."/>
            <person name="Ikema Y."/>
            <person name="Okamoto S."/>
            <person name="Okitani R."/>
            <person name="Kawakami T."/>
            <person name="Noguchi S."/>
            <person name="Itoh T."/>
            <person name="Shigeta K."/>
            <person name="Senba T."/>
            <person name="Matsumura K."/>
            <person name="Nakajima Y."/>
            <person name="Mizuno T."/>
            <person name="Morinaga M."/>
            <person name="Sasaki M."/>
            <person name="Togashi T."/>
            <person name="Oyama M."/>
            <person name="Hata H."/>
            <person name="Watanabe M."/>
            <person name="Komatsu T."/>
            <person name="Mizushima-Sugano J."/>
            <person name="Satoh T."/>
            <person name="Shirai Y."/>
            <person name="Takahashi Y."/>
            <person name="Nakagawa K."/>
            <person name="Okumura K."/>
            <person name="Nagase T."/>
            <person name="Nomura N."/>
            <person name="Kikuchi H."/>
            <person name="Masuho Y."/>
            <person name="Yamashita R."/>
            <person name="Nakai K."/>
            <person name="Yada T."/>
            <person name="Nakamura Y."/>
            <person name="Ohara O."/>
            <person name="Isogai T."/>
            <person name="Sugano S."/>
        </authorList>
    </citation>
    <scope>NUCLEOTIDE SEQUENCE [LARGE SCALE MRNA]</scope>
    <source>
        <tissue>Mammary gland</tissue>
    </source>
</reference>
<reference key="3">
    <citation type="journal article" date="2006" name="Nature">
        <title>DNA sequence and analysis of human chromosome 8.</title>
        <authorList>
            <person name="Nusbaum C."/>
            <person name="Mikkelsen T.S."/>
            <person name="Zody M.C."/>
            <person name="Asakawa S."/>
            <person name="Taudien S."/>
            <person name="Garber M."/>
            <person name="Kodira C.D."/>
            <person name="Schueler M.G."/>
            <person name="Shimizu A."/>
            <person name="Whittaker C.A."/>
            <person name="Chang J.L."/>
            <person name="Cuomo C.A."/>
            <person name="Dewar K."/>
            <person name="FitzGerald M.G."/>
            <person name="Yang X."/>
            <person name="Allen N.R."/>
            <person name="Anderson S."/>
            <person name="Asakawa T."/>
            <person name="Blechschmidt K."/>
            <person name="Bloom T."/>
            <person name="Borowsky M.L."/>
            <person name="Butler J."/>
            <person name="Cook A."/>
            <person name="Corum B."/>
            <person name="DeArellano K."/>
            <person name="DeCaprio D."/>
            <person name="Dooley K.T."/>
            <person name="Dorris L. III"/>
            <person name="Engels R."/>
            <person name="Gloeckner G."/>
            <person name="Hafez N."/>
            <person name="Hagopian D.S."/>
            <person name="Hall J.L."/>
            <person name="Ishikawa S.K."/>
            <person name="Jaffe D.B."/>
            <person name="Kamat A."/>
            <person name="Kudoh J."/>
            <person name="Lehmann R."/>
            <person name="Lokitsang T."/>
            <person name="Macdonald P."/>
            <person name="Major J.E."/>
            <person name="Matthews C.D."/>
            <person name="Mauceli E."/>
            <person name="Menzel U."/>
            <person name="Mihalev A.H."/>
            <person name="Minoshima S."/>
            <person name="Murayama Y."/>
            <person name="Naylor J.W."/>
            <person name="Nicol R."/>
            <person name="Nguyen C."/>
            <person name="O'Leary S.B."/>
            <person name="O'Neill K."/>
            <person name="Parker S.C.J."/>
            <person name="Polley A."/>
            <person name="Raymond C.K."/>
            <person name="Reichwald K."/>
            <person name="Rodriguez J."/>
            <person name="Sasaki T."/>
            <person name="Schilhabel M."/>
            <person name="Siddiqui R."/>
            <person name="Smith C.L."/>
            <person name="Sneddon T.P."/>
            <person name="Talamas J.A."/>
            <person name="Tenzin P."/>
            <person name="Topham K."/>
            <person name="Venkataraman V."/>
            <person name="Wen G."/>
            <person name="Yamazaki S."/>
            <person name="Young S.K."/>
            <person name="Zeng Q."/>
            <person name="Zimmer A.R."/>
            <person name="Rosenthal A."/>
            <person name="Birren B.W."/>
            <person name="Platzer M."/>
            <person name="Shimizu N."/>
            <person name="Lander E.S."/>
        </authorList>
    </citation>
    <scope>NUCLEOTIDE SEQUENCE [LARGE SCALE GENOMIC DNA]</scope>
</reference>
<reference key="4">
    <citation type="submission" date="2005-09" db="EMBL/GenBank/DDBJ databases">
        <authorList>
            <person name="Mural R.J."/>
            <person name="Istrail S."/>
            <person name="Sutton G.G."/>
            <person name="Florea L."/>
            <person name="Halpern A.L."/>
            <person name="Mobarry C.M."/>
            <person name="Lippert R."/>
            <person name="Walenz B."/>
            <person name="Shatkay H."/>
            <person name="Dew I."/>
            <person name="Miller J.R."/>
            <person name="Flanigan M.J."/>
            <person name="Edwards N.J."/>
            <person name="Bolanos R."/>
            <person name="Fasulo D."/>
            <person name="Halldorsson B.V."/>
            <person name="Hannenhalli S."/>
            <person name="Turner R."/>
            <person name="Yooseph S."/>
            <person name="Lu F."/>
            <person name="Nusskern D.R."/>
            <person name="Shue B.C."/>
            <person name="Zheng X.H."/>
            <person name="Zhong F."/>
            <person name="Delcher A.L."/>
            <person name="Huson D.H."/>
            <person name="Kravitz S.A."/>
            <person name="Mouchard L."/>
            <person name="Reinert K."/>
            <person name="Remington K.A."/>
            <person name="Clark A.G."/>
            <person name="Waterman M.S."/>
            <person name="Eichler E.E."/>
            <person name="Adams M.D."/>
            <person name="Hunkapiller M.W."/>
            <person name="Myers E.W."/>
            <person name="Venter J.C."/>
        </authorList>
    </citation>
    <scope>NUCLEOTIDE SEQUENCE [LARGE SCALE GENOMIC DNA]</scope>
</reference>
<reference key="5">
    <citation type="journal article" date="2004" name="Genome Res.">
        <title>The status, quality, and expansion of the NIH full-length cDNA project: the Mammalian Gene Collection (MGC).</title>
        <authorList>
            <consortium name="The MGC Project Team"/>
        </authorList>
    </citation>
    <scope>NUCLEOTIDE SEQUENCE [LARGE SCALE MRNA]</scope>
    <source>
        <tissue>Lymph</tissue>
        <tissue>Salivary gland</tissue>
    </source>
</reference>
<reference key="6">
    <citation type="journal article" date="2017" name="Cell Chem. Biol.">
        <title>Pyroptosis and apoptosis pathways engage in bidirectional crosstalk in monocytes and macrophages.</title>
        <authorList>
            <person name="Taabazuing C.Y."/>
            <person name="Okondo M.C."/>
            <person name="Bachovchin D.A."/>
        </authorList>
    </citation>
    <scope>PROTEIN SEQUENCE OF 88-94</scope>
    <scope>ACTIVITY REGULATION</scope>
    <scope>PROTEOLYTIC CLEAVAGE</scope>
</reference>
<reference key="7">
    <citation type="journal article" date="2015" name="Nature">
        <title>Cleavage of GSDMD by inflammatory caspases determines pyroptotic cell death.</title>
        <authorList>
            <person name="Shi J."/>
            <person name="Zhao Y."/>
            <person name="Wang K."/>
            <person name="Shi X."/>
            <person name="Wang Y."/>
            <person name="Huang H."/>
            <person name="Zhuang Y."/>
            <person name="Cai T."/>
            <person name="Wang F."/>
            <person name="Shao F."/>
        </authorList>
    </citation>
    <scope>PROTEIN SEQUENCE OF 276-281</scope>
    <scope>FUNCTION</scope>
    <scope>CLEAVAGE BY CASP1 AND CASP4</scope>
    <scope>MUTAGENESIS OF ASP-275</scope>
    <scope>AUTOINHIBITION</scope>
</reference>
<reference key="8">
    <citation type="journal article" date="2004" name="Int. J. Oncol.">
        <title>Identification and characterization of human DFNA5L, mouse Dfna5l, and rat Dfna5l genes in silico.</title>
        <authorList>
            <person name="Katoh M."/>
            <person name="Katoh M."/>
        </authorList>
    </citation>
    <scope>GENE STRUCTURE</scope>
</reference>
<reference key="9">
    <citation type="journal article" date="2005" name="Nat. Biotechnol.">
        <title>Immunoaffinity profiling of tyrosine phosphorylation in cancer cells.</title>
        <authorList>
            <person name="Rush J."/>
            <person name="Moritz A."/>
            <person name="Lee K.A."/>
            <person name="Guo A."/>
            <person name="Goss V.L."/>
            <person name="Spek E.J."/>
            <person name="Zhang H."/>
            <person name="Zha X.-M."/>
            <person name="Polakiewicz R.D."/>
            <person name="Comb M.J."/>
        </authorList>
    </citation>
    <scope>PHOSPHORYLATION [LARGE SCALE ANALYSIS] AT TYR-37 AND TYR-158</scope>
    <scope>IDENTIFICATION BY MASS SPECTROMETRY [LARGE SCALE ANALYSIS]</scope>
</reference>
<reference key="10">
    <citation type="journal article" date="2008" name="Proc. Natl. Acad. Sci. U.S.A.">
        <title>A quantitative atlas of mitotic phosphorylation.</title>
        <authorList>
            <person name="Dephoure N."/>
            <person name="Zhou C."/>
            <person name="Villen J."/>
            <person name="Beausoleil S.A."/>
            <person name="Bakalarski C.E."/>
            <person name="Elledge S.J."/>
            <person name="Gygi S.P."/>
        </authorList>
    </citation>
    <scope>IDENTIFICATION BY MASS SPECTROMETRY [LARGE SCALE ANALYSIS]</scope>
    <source>
        <tissue>Cervix carcinoma</tissue>
    </source>
</reference>
<reference key="11">
    <citation type="journal article" date="2009" name="Genes Chromosomes Cancer">
        <title>Distinctive expression and function of four GSDM family genes (GSDMA-D) in normal and malignant upper gastrointestinal epithelium.</title>
        <authorList>
            <person name="Saeki N."/>
            <person name="Usui T."/>
            <person name="Aoyagi K."/>
            <person name="Kim D.H."/>
            <person name="Sato M."/>
            <person name="Mabuchi T."/>
            <person name="Yanagihara K."/>
            <person name="Ogawa K."/>
            <person name="Sakamoto H."/>
            <person name="Yoshida T."/>
            <person name="Sasaki H."/>
        </authorList>
    </citation>
    <scope>TISSUE SPECIFICITY</scope>
</reference>
<reference key="12">
    <citation type="journal article" date="2009" name="Sci. Signal.">
        <title>Quantitative phosphoproteomic analysis of T cell receptor signaling reveals system-wide modulation of protein-protein interactions.</title>
        <authorList>
            <person name="Mayya V."/>
            <person name="Lundgren D.H."/>
            <person name="Hwang S.-I."/>
            <person name="Rezaul K."/>
            <person name="Wu L."/>
            <person name="Eng J.K."/>
            <person name="Rodionov V."/>
            <person name="Han D.K."/>
        </authorList>
    </citation>
    <scope>IDENTIFICATION BY MASS SPECTROMETRY [LARGE SCALE ANALYSIS]</scope>
    <source>
        <tissue>Leukemic T-cell</tissue>
    </source>
</reference>
<reference key="13">
    <citation type="journal article" date="2011" name="BMC Syst. Biol.">
        <title>Initial characterization of the human central proteome.</title>
        <authorList>
            <person name="Burkard T.R."/>
            <person name="Planyavsky M."/>
            <person name="Kaupe I."/>
            <person name="Breitwieser F.P."/>
            <person name="Buerckstuemmer T."/>
            <person name="Bennett K.L."/>
            <person name="Superti-Furga G."/>
            <person name="Colinge J."/>
        </authorList>
    </citation>
    <scope>IDENTIFICATION BY MASS SPECTROMETRY [LARGE SCALE ANALYSIS]</scope>
</reference>
<reference key="14">
    <citation type="journal article" date="2013" name="J. Proteome Res.">
        <title>Toward a comprehensive characterization of a human cancer cell phosphoproteome.</title>
        <authorList>
            <person name="Zhou H."/>
            <person name="Di Palma S."/>
            <person name="Preisinger C."/>
            <person name="Peng M."/>
            <person name="Polat A.N."/>
            <person name="Heck A.J."/>
            <person name="Mohammed S."/>
        </authorList>
    </citation>
    <scope>IDENTIFICATION BY MASS SPECTROMETRY [LARGE SCALE ANALYSIS]</scope>
    <source>
        <tissue>Cervix carcinoma</tissue>
    </source>
</reference>
<reference key="15">
    <citation type="journal article" date="2014" name="J. Proteomics">
        <title>An enzyme assisted RP-RPLC approach for in-depth analysis of human liver phosphoproteome.</title>
        <authorList>
            <person name="Bian Y."/>
            <person name="Song C."/>
            <person name="Cheng K."/>
            <person name="Dong M."/>
            <person name="Wang F."/>
            <person name="Huang J."/>
            <person name="Sun D."/>
            <person name="Wang L."/>
            <person name="Ye M."/>
            <person name="Zou H."/>
        </authorList>
    </citation>
    <scope>PHOSPHORYLATION [LARGE SCALE ANALYSIS] AT SER-185</scope>
    <scope>IDENTIFICATION BY MASS SPECTROMETRY [LARGE SCALE ANALYSIS]</scope>
    <source>
        <tissue>Liver</tissue>
    </source>
</reference>
<reference key="16">
    <citation type="journal article" date="2015" name="Nature">
        <title>Caspase-11 cleaves gasdermin D for non-canonical inflammasome signalling.</title>
        <authorList>
            <person name="Kayagaki N."/>
            <person name="Stowe I.B."/>
            <person name="Lee B.L."/>
            <person name="O'Rourke K."/>
            <person name="Anderson K."/>
            <person name="Warming S."/>
            <person name="Cuellar T."/>
            <person name="Haley B."/>
            <person name="Roose-Girma M."/>
            <person name="Phung Q.T."/>
            <person name="Liu P.S."/>
            <person name="Lill J.R."/>
            <person name="Li H."/>
            <person name="Wu J."/>
            <person name="Kummerfeld S."/>
            <person name="Zhang J."/>
            <person name="Lee W.P."/>
            <person name="Snipas S.J."/>
            <person name="Salvesen G.S."/>
            <person name="Morris L.X."/>
            <person name="Fitzgerald L."/>
            <person name="Zhang Y."/>
            <person name="Bertram E.M."/>
            <person name="Goodnow C.C."/>
            <person name="Dixit V.M."/>
        </authorList>
    </citation>
    <scope>FUNCTION</scope>
    <scope>CLEAVAGE BY CASP4</scope>
</reference>
<reference key="17">
    <citation type="journal article" date="2015" name="Proteomics">
        <title>N-terminome analysis of the human mitochondrial proteome.</title>
        <authorList>
            <person name="Vaca Jacome A.S."/>
            <person name="Rabilloud T."/>
            <person name="Schaeffer-Reiss C."/>
            <person name="Rompais M."/>
            <person name="Ayoub D."/>
            <person name="Lane L."/>
            <person name="Bairoch A."/>
            <person name="Van Dorsselaer A."/>
            <person name="Carapito C."/>
        </authorList>
    </citation>
    <scope>IDENTIFICATION BY MASS SPECTROMETRY [LARGE SCALE ANALYSIS]</scope>
</reference>
<reference key="18">
    <citation type="journal article" date="2016" name="EMBO J.">
        <title>GSDMD membrane pore formation constitutes the mechanism of pyroptotic cell death.</title>
        <authorList>
            <person name="Sborgi L."/>
            <person name="Ruehl S."/>
            <person name="Mulvihill E."/>
            <person name="Pipercevic J."/>
            <person name="Heilig R."/>
            <person name="Stahlberg H."/>
            <person name="Farady C.J."/>
            <person name="Mueller D.J."/>
            <person name="Broz P."/>
            <person name="Hiller S."/>
        </authorList>
    </citation>
    <scope>FUNCTION (GASDERMIN-D</scope>
    <scope>N-TERMINAL)</scope>
    <scope>CLEAVAGE BY CASP1</scope>
    <scope>MUTAGENESIS OF ILE-104</scope>
</reference>
<reference key="19">
    <citation type="journal article" date="2016" name="Nature">
        <title>Pore-forming activity and structural autoinhibition of the gasdermin family.</title>
        <authorList>
            <person name="Ding J."/>
            <person name="Wang K."/>
            <person name="Liu W."/>
            <person name="She Y."/>
            <person name="Sun Q."/>
            <person name="Shi J."/>
            <person name="Sun H."/>
            <person name="Wang D.C."/>
            <person name="Shao F."/>
        </authorList>
    </citation>
    <scope>FUNCTION (GASDERMIN-D</scope>
    <scope>N-TERMINAL)</scope>
    <scope>LIPID-BINDING</scope>
    <scope>SUBCELLULAR LOCATION</scope>
    <scope>MUTAGENESIS OF GLU-15; LEU-192; LEU-290; TYR-373 AND ALA-377</scope>
</reference>
<reference key="20">
    <citation type="journal article" date="2017" name="J. Virol.">
        <title>Enterovirus 71 inhibits pyroptosis through cleavage of gasdermin D.</title>
        <authorList>
            <person name="Lei X."/>
            <person name="Zhang Z."/>
            <person name="Xiao X."/>
            <person name="Qi J."/>
            <person name="He B."/>
            <person name="Wang J."/>
        </authorList>
    </citation>
    <scope>CLEAVAGE BY HUMAN ENTEROVIRUS PROTEASE 3C</scope>
    <scope>MUTAGENESIS OF GLN-193; ASP-234; LYS-235; LYS-236; GLN-237; ARG-238; THR-239; PHE-240; GLN-241; PRO-242; PRO-243 AND GLN-335</scope>
</reference>
<reference key="21">
    <citation type="journal article" date="2017" name="Nat. Commun.">
        <title>Cleavage of DFNA5 by caspase-3 during apoptosis mediates progression to secondary necrotic/pyroptotic cell death.</title>
        <authorList>
            <person name="Rogers C."/>
            <person name="Fernandes-Alnemri T."/>
            <person name="Mayes L."/>
            <person name="Alnemri D."/>
            <person name="Cingolani G."/>
            <person name="Alnemri E.S."/>
        </authorList>
    </citation>
    <scope>CLEAVAGE BY CASP3</scope>
</reference>
<reference key="22">
    <citation type="journal article" date="2018" name="EMBO J.">
        <title>Mechanism of membrane pore formation by human gasdermin-D.</title>
        <authorList>
            <person name="Mulvihill E."/>
            <person name="Sborgi L."/>
            <person name="Mari S.A."/>
            <person name="Pfreundschuh M."/>
            <person name="Hiller S."/>
            <person name="Mueller D.J."/>
        </authorList>
    </citation>
    <scope>FUNCTION</scope>
    <scope>CLEAVAGE BY CASP5</scope>
    <scope>SUBCELLULAR LOCATION</scope>
</reference>
<reference key="23">
    <citation type="journal article" date="2018" name="Nature">
        <title>Cryo-EM structure of the gasdermin A3 membrane pore.</title>
        <authorList>
            <person name="Ruan J."/>
            <person name="Xia S."/>
            <person name="Liu X."/>
            <person name="Lieberman J."/>
            <person name="Wu H."/>
        </authorList>
    </citation>
    <scope>MUTAGENESIS OF 7-ARG--ARG-11</scope>
</reference>
<reference key="24">
    <citation type="journal article" date="2020" name="Science">
        <title>Succination inactivates gasdermin D and blocks pyroptosis.</title>
        <authorList>
            <person name="Humphries F."/>
            <person name="Shmuel-Galia L."/>
            <person name="Ketelut-Carneiro N."/>
            <person name="Li S."/>
            <person name="Wang B."/>
            <person name="Nemmara V.V."/>
            <person name="Wilson R."/>
            <person name="Jiang Z."/>
            <person name="Khalighinejad F."/>
            <person name="Muneeruddin K."/>
            <person name="Shaffer S.A."/>
            <person name="Dutta R."/>
            <person name="Ionete C."/>
            <person name="Pesiridis S."/>
            <person name="Yang S."/>
            <person name="Thompson P.R."/>
            <person name="Fitzgerald K.A."/>
        </authorList>
    </citation>
    <scope>FUNCTION</scope>
    <scope>SUCCINATION AT CYS-56; CYS-191; CYS-268; CYS-309 AND CYS-467</scope>
</reference>
<reference key="25">
    <citation type="journal article" date="2021" name="Cell">
        <title>Control of gasdermin D oligomerization and pyroptosis by the Ragulator-Rag-mTORC1 pathway.</title>
        <authorList>
            <person name="Evavold C.L."/>
            <person name="Hafner-Bratkovic I."/>
            <person name="Devant P."/>
            <person name="D'Andrea J.M."/>
            <person name="Ngwa E.M."/>
            <person name="Borsic E."/>
            <person name="Doench J.G."/>
            <person name="LaFleur M.W."/>
            <person name="Sharpe A.H."/>
            <person name="Thiagarajah J.R."/>
            <person name="Kagan J.C."/>
        </authorList>
    </citation>
    <scope>FUNCTION</scope>
    <scope>SUBUNIT</scope>
</reference>
<reference key="26">
    <citation type="journal article" date="2021" name="Cell Host Microbe">
        <title>Shigella ubiquitin ligase IpaH7.8 targets gasdermin D for degradation to prevent pyroptosis and enable infection.</title>
        <authorList>
            <person name="Luchetti G."/>
            <person name="Roncaioli J.L."/>
            <person name="Chavez R.A."/>
            <person name="Schubert A.F."/>
            <person name="Kofoed E.M."/>
            <person name="Reja R."/>
            <person name="Cheung T.K."/>
            <person name="Liang Y."/>
            <person name="Webster J.D."/>
            <person name="Lehoux I."/>
            <person name="Skippington E."/>
            <person name="Reeder J."/>
            <person name="Haley B."/>
            <person name="Tan M.W."/>
            <person name="Rose C.M."/>
            <person name="Newton K."/>
            <person name="Kayagaki N."/>
            <person name="Vance R.E."/>
            <person name="Dixit V.M."/>
        </authorList>
    </citation>
    <scope>UBIQUITINATION (MICROBIAL INFECTION)</scope>
</reference>
<reference key="27">
    <citation type="journal article" date="2021" name="Nature">
        <title>NINJ1 mediates plasma membrane rupture during lytic cell death.</title>
        <authorList>
            <person name="Kayagaki N."/>
            <person name="Kornfeld O.S."/>
            <person name="Lee B.L."/>
            <person name="Stowe I.B."/>
            <person name="O'Rourke K."/>
            <person name="Li Q."/>
            <person name="Sandoval W."/>
            <person name="Yan D."/>
            <person name="Kang J."/>
            <person name="Xu M."/>
            <person name="Zhang J."/>
            <person name="Lee W.P."/>
            <person name="McKenzie B.S."/>
            <person name="Ulas G."/>
            <person name="Payandeh J."/>
            <person name="Roose-Girma M."/>
            <person name="Modrusan Z."/>
            <person name="Reja R."/>
            <person name="Sagolla M."/>
            <person name="Webster J.D."/>
            <person name="Cho V."/>
            <person name="Andrews T.D."/>
            <person name="Morris L.X."/>
            <person name="Miosge L.A."/>
            <person name="Goodnow C.C."/>
            <person name="Bertram E.M."/>
            <person name="Dixit V.M."/>
        </authorList>
    </citation>
    <scope>FUNCTION</scope>
</reference>
<reference key="28">
    <citation type="journal article" date="2022" name="Nat. Immunol.">
        <title>Allergen protease-activated stress granule assembly and gasdermin D fragmentation control interleukin-33 secretion.</title>
        <authorList>
            <person name="Chen W."/>
            <person name="Chen S."/>
            <person name="Yan C."/>
            <person name="Zhang Y."/>
            <person name="Zhang R."/>
            <person name="Chen M."/>
            <person name="Zhong S."/>
            <person name="Fan W."/>
            <person name="Zhu S."/>
            <person name="Zhang D."/>
            <person name="Lu X."/>
            <person name="Zhang J."/>
            <person name="Huang Y."/>
            <person name="Zhu L."/>
            <person name="Li X."/>
            <person name="Lv D."/>
            <person name="Fu Y."/>
            <person name="Iv H."/>
            <person name="Ling Z."/>
            <person name="Ma L."/>
            <person name="Jiang H."/>
            <person name="Long G."/>
            <person name="Zhu J."/>
            <person name="Wu D."/>
            <person name="Wu B."/>
            <person name="Sun B."/>
        </authorList>
    </citation>
    <scope>FUNCTION (GASDERMIN-D</scope>
    <scope>P40)</scope>
    <scope>PROTEOLYTIC CLEAVAGE</scope>
    <scope>MUTAGENESIS OF 288-GLN--ARG-291</scope>
</reference>
<reference key="29">
    <citation type="journal article" date="2022" name="Mol. Cell">
        <title>Human NLRP1 is a sensor of pathogenic coronavirus 3CL proteases in lung epithelial cells.</title>
        <authorList>
            <consortium name="COVID Human Genetic Effort"/>
            <person name="Planes R."/>
            <person name="Pinilla M."/>
            <person name="Santoni K."/>
            <person name="Hessel A."/>
            <person name="Passemar C."/>
            <person name="Lay K."/>
            <person name="Paillette P."/>
            <person name="Valadao A.C."/>
            <person name="Robinson K.S."/>
            <person name="Bastard P."/>
            <person name="Lam N."/>
            <person name="Fadrique R."/>
            <person name="Rossi I."/>
            <person name="Pericat D."/>
            <person name="Bagayoko S."/>
            <person name="Leon-Icaza S.A."/>
            <person name="Rombouts Y."/>
            <person name="Perouzel E."/>
            <person name="Tiraby M."/>
            <person name="Zhang Q."/>
            <person name="Cicuta P."/>
            <person name="Jouanguy E."/>
            <person name="Neyrolles O."/>
            <person name="Bryant C.E."/>
            <person name="Floto A.R."/>
            <person name="Goujon C."/>
            <person name="Lei F.Z."/>
            <person name="Martin-Blondel G."/>
            <person name="Silva S."/>
            <person name="Casanova J.L."/>
            <person name="Cougoule C."/>
            <person name="Reversade B."/>
            <person name="Marcoux J."/>
            <person name="Ravet E."/>
            <person name="Meunier E."/>
        </authorList>
    </citation>
    <scope>PROTEOLYTIC CLEAVAGE (MICROBIAL INFECTION)</scope>
    <scope>MUTAGENESIS OF GLN-193</scope>
</reference>
<reference key="30">
    <citation type="journal article" date="2022" name="Science">
        <title>A bacterial phospholipid phosphatase inhibits host pyroptosis by hijacking ubiquitin.</title>
        <authorList>
            <person name="Chai Q."/>
            <person name="Yu S."/>
            <person name="Zhong Y."/>
            <person name="Lu Z."/>
            <person name="Qiu C."/>
            <person name="Yu Y."/>
            <person name="Zhang X."/>
            <person name="Zhang Y."/>
            <person name="Lei Z."/>
            <person name="Qiang L."/>
            <person name="Li B.X."/>
            <person name="Pang Y."/>
            <person name="Qiu X.B."/>
            <person name="Wang J."/>
            <person name="Liu C.H."/>
        </authorList>
    </citation>
    <scope>FUNCTION</scope>
    <scope>SUBCELLULAR LOCATION</scope>
    <scope>SUBCELLULAR LOCATION (MICROBIAL INFECTION)</scope>
    <scope>MUTAGENESIS OF LEU-192</scope>
</reference>
<reference key="31">
    <citation type="journal article" date="2023" name="Cell">
        <title>Gasdermin D licenses MHCII induction to maintain food tolerance in small intestine.</title>
        <authorList>
            <person name="He K."/>
            <person name="Wan T."/>
            <person name="Wang D."/>
            <person name="Hu J."/>
            <person name="Zhou T."/>
            <person name="Tao W."/>
            <person name="Wei Z."/>
            <person name="Lu Q."/>
            <person name="Zhou R."/>
            <person name="Tian Z."/>
            <person name="Flavell R.A."/>
            <person name="Zhu S."/>
        </authorList>
    </citation>
    <scope>PROTEOLYTIC CLEAVAGE</scope>
</reference>
<reference key="32">
    <citation type="journal article" date="2023" name="Nature">
        <title>Structural basis for GSDMB pore formation and its targeting by IpaH7.8.</title>
        <authorList>
            <person name="Wang C."/>
            <person name="Shivcharan S."/>
            <person name="Tian T."/>
            <person name="Wright S."/>
            <person name="Ma D."/>
            <person name="Chang J."/>
            <person name="Li K."/>
            <person name="Song K."/>
            <person name="Xu C."/>
            <person name="Rathinam V.A."/>
            <person name="Ruan J."/>
        </authorList>
    </citation>
    <scope>UBIQUITINATION (MICROBIAL INFECTION)</scope>
</reference>
<reference key="33">
    <citation type="journal article" date="2023" name="Nature">
        <title>Structural mechanisms for regulation of GSDMB pore-forming activity.</title>
        <authorList>
            <person name="Zhong X."/>
            <person name="Zeng H."/>
            <person name="Zhou Z."/>
            <person name="Su Y."/>
            <person name="Cheng H."/>
            <person name="Hou Y."/>
            <person name="She Y."/>
            <person name="Feng N."/>
            <person name="Wang J."/>
            <person name="Shao F."/>
            <person name="Ding J."/>
        </authorList>
    </citation>
    <scope>UBIQUITINATION (MICROBIAL INFECTION)</scope>
    <scope>MUTAGENESIS OF 16-LEU--PHE-22</scope>
</reference>
<reference key="34">
    <citation type="journal article" date="2023" name="Nature">
        <title>Structural basis of NINJ1-mediated plasma membrane rupture in cell death.</title>
        <authorList>
            <person name="Degen M."/>
            <person name="Santos J.C."/>
            <person name="Pluhackova K."/>
            <person name="Cebrero G."/>
            <person name="Ramos S."/>
            <person name="Jankevicius G."/>
            <person name="Hartenian E."/>
            <person name="Guillerm U."/>
            <person name="Mari S.A."/>
            <person name="Kohl B."/>
            <person name="Mueller D.J."/>
            <person name="Schanda P."/>
            <person name="Maier T."/>
            <person name="Perez C."/>
            <person name="Sieben C."/>
            <person name="Broz P."/>
            <person name="Hiller S."/>
        </authorList>
    </citation>
    <scope>FUNCTION</scope>
</reference>
<reference key="35">
    <citation type="journal article" date="2023" name="Nat. Commun.">
        <title>Insights into the GSDMB-mediated cellular lysis and its targeting by IpaH7.8.</title>
        <authorList>
            <person name="Yin H."/>
            <person name="Zheng J."/>
            <person name="He Q."/>
            <person name="Zhang X."/>
            <person name="Li X."/>
            <person name="Ma Y."/>
            <person name="Liang X."/>
            <person name="Gao J."/>
            <person name="Kocsis B.L."/>
            <person name="Li Z."/>
            <person name="Liu X."/>
            <person name="Alto N.M."/>
            <person name="Li L."/>
            <person name="Zhang H."/>
        </authorList>
    </citation>
    <scope>UBIQUITINATION (MICROBIAL INFECTION)</scope>
</reference>
<reference key="36">
    <citation type="journal article" date="2024" name="Inflamm. Res.">
        <title>O-GlcNAc modification of GSDMD attenuates LPS-induced endothelial cells pyroptosis.</title>
        <authorList>
            <person name="Yu F."/>
            <person name="Zhang Z."/>
            <person name="Leng Y."/>
            <person name="Chen A.F."/>
        </authorList>
    </citation>
    <scope>GLYCOSYLATION AT SER-338</scope>
    <scope>MUTAGENESIS OF SER-338</scope>
</reference>
<reference key="37">
    <citation type="journal article" date="2024" name="Nature">
        <title>ROS-dependent S-palmitoylation activates cleaved and intact gasdermin D.</title>
        <authorList>
            <person name="Du G."/>
            <person name="Healy L.B."/>
            <person name="David L."/>
            <person name="Walker C."/>
            <person name="El-Baba T.J."/>
            <person name="Lutomski C.A."/>
            <person name="Goh B."/>
            <person name="Gu B."/>
            <person name="Pi X."/>
            <person name="Devant P."/>
            <person name="Fontana P."/>
            <person name="Dong Y."/>
            <person name="Ma X."/>
            <person name="Miao R."/>
            <person name="Balasubramanian A."/>
            <person name="Puthenveetil R."/>
            <person name="Banerjee A."/>
            <person name="Luo H.R."/>
            <person name="Kagan J.C."/>
            <person name="Oh S.F."/>
            <person name="Robinson C.V."/>
            <person name="Lieberman J."/>
            <person name="Wu H."/>
        </authorList>
    </citation>
    <scope>FUNCTION</scope>
    <scope>SUBCELLULAR LOCATION</scope>
    <scope>PALMITOYLATION AT CYS-191</scope>
    <scope>MUTAGENESIS OF CYS-191 AND ASP-275</scope>
    <scope>VARIANT ALA-41</scope>
    <scope>CHARACTERIZATION OF VARIANT ALA-41</scope>
</reference>
<reference key="38">
    <citation type="journal article" date="2024" name="Sci. Adv.">
        <title>NU6300 covalently reacts with cysteine-191 of gasdermin D to block its cleavage and palmitoylation.</title>
        <authorList>
            <person name="Jiang X."/>
            <person name="Zhang X."/>
            <person name="Cai X."/>
            <person name="Li N."/>
            <person name="Zheng H."/>
            <person name="Tang M."/>
            <person name="Zhu J."/>
            <person name="Su K."/>
            <person name="Zhang R."/>
            <person name="Ye N."/>
            <person name="Peng J."/>
            <person name="Zhao M."/>
            <person name="Wu W."/>
            <person name="Yang J."/>
            <person name="Ye H."/>
        </authorList>
    </citation>
    <scope>PALMITOYLATION AT CYS-191</scope>
    <scope>ACTIVITY REGULATION</scope>
    <scope>MUTAGENESIS OF CYS-191</scope>
</reference>
<reference key="39">
    <citation type="journal article" date="2024" name="Sci. Immunol.">
        <title>The palmitoylation of gasdermin D directs its membrane translocation and pore formation during pyroptosis.</title>
        <authorList>
            <person name="Balasubramanian A."/>
            <person name="Hsu A.Y."/>
            <person name="Ghimire L."/>
            <person name="Tahir M."/>
            <person name="Devant P."/>
            <person name="Fontana P."/>
            <person name="Du G."/>
            <person name="Liu X."/>
            <person name="Fabin D."/>
            <person name="Kambara H."/>
            <person name="Xie X."/>
            <person name="Liu F."/>
            <person name="Hasegawa T."/>
            <person name="Xu R."/>
            <person name="Yu H."/>
            <person name="Chen M."/>
            <person name="Kolakowski S."/>
            <person name="Trauger S."/>
            <person name="Larsen M.R."/>
            <person name="Wei W."/>
            <person name="Wu H."/>
            <person name="Kagan J.C."/>
            <person name="Lieberman J."/>
            <person name="Luo H.R."/>
        </authorList>
    </citation>
    <scope>FUNCTION</scope>
    <scope>SUBCELLULAR LOCATION</scope>
    <scope>PALMITOYLATION</scope>
</reference>
<reference evidence="47" key="40">
    <citation type="journal article" date="2017" name="Proc. Natl. Acad. Sci. U.S.A.">
        <title>Structure insight of GSDMD reveals the basis of GSDMD autoinhibition in cell pyroptosis.</title>
        <authorList>
            <person name="Kuang S."/>
            <person name="Zheng J."/>
            <person name="Yang H."/>
            <person name="Li S."/>
            <person name="Duan S."/>
            <person name="Shen Y."/>
            <person name="Ji C."/>
            <person name="Gan J."/>
            <person name="Xu X.W."/>
            <person name="Li J."/>
        </authorList>
    </citation>
    <scope>X-RAY CRYSTALLOGRAPHY (2.64 ANGSTROMS) OF 276-484</scope>
    <scope>DOMAIN</scope>
    <scope>ACTIVITY REGULATION</scope>
    <scope>MUTAGENESIS OF GLU-15; LEU-192; 277-VAL--THR-296 AND PHE-283</scope>
</reference>
<reference evidence="48" key="41">
    <citation type="journal article" date="2018" name="Structure">
        <title>Structures of the Gasdermin D C-terminal domains reveal mechanisms of autoinhibition.</title>
        <authorList>
            <person name="Liu Z."/>
            <person name="Wang C."/>
            <person name="Rathkey J.K."/>
            <person name="Yang J."/>
            <person name="Dubyak G.R."/>
            <person name="Abbott D.W."/>
            <person name="Xiao T.S."/>
        </authorList>
    </citation>
    <scope>X-RAY CRYSTALLOGRAPHY (2.90 ANGSTROMS) OF 277-484</scope>
    <scope>DOMAIN</scope>
    <scope>ACTIVITY REGULATION</scope>
</reference>
<reference evidence="50" key="42">
    <citation type="journal article" date="2019" name="Immunity">
        <title>Crystal structures of the full-length murine and human Gasdermin D reveal mechanisms of autoinhibition, lipid binding, and oligomerization.</title>
        <authorList>
            <person name="Liu Z."/>
            <person name="Wang C."/>
            <person name="Yang J."/>
            <person name="Zhou B."/>
            <person name="Yang R."/>
            <person name="Ramachandran R."/>
            <person name="Abbott D.W."/>
            <person name="Xiao T.S."/>
        </authorList>
    </citation>
    <scope>X-RAY CRYSTALLOGRAPHY (3.50 ANGSTROMS)</scope>
</reference>
<reference evidence="49" key="43">
    <citation type="journal article" date="2020" name="Cell">
        <title>Structural mechanism for GSDMD targeting by autoprocessed caspases in pyroptosis.</title>
        <authorList>
            <person name="Wang K."/>
            <person name="Sun Q."/>
            <person name="Zhong X."/>
            <person name="Zeng M."/>
            <person name="Zeng H."/>
            <person name="Shi X."/>
            <person name="Li Z."/>
            <person name="Wang Y."/>
            <person name="Zhao Q."/>
            <person name="Shao F."/>
            <person name="Ding J."/>
        </authorList>
    </citation>
    <scope>X-RAY CRYSTALLOGRAPHY (2.79 ANGSTROMS) OF 283-480 IN COMPLEX WITH CASP1</scope>
    <scope>ACTIVITY REGULATION</scope>
    <scope>SUBCELLULAR LOCATION</scope>
    <scope>PROTEOLYTIC CLEAVAGE</scope>
    <scope>MUTAGENESIS OF 272-PHE--THR-274; ASP-275; 304-LEU--LEU-308 AND 364-VAL--LEU-367</scope>
</reference>
<reference evidence="51" key="44">
    <citation type="journal article" date="2021" name="Nature">
        <title>Gasdermin D pore structure reveals preferential release of mature interleukin-1.</title>
        <authorList>
            <person name="Xia S."/>
            <person name="Zhang Z."/>
            <person name="Magupalli V.G."/>
            <person name="Pablo J.L."/>
            <person name="Dong Y."/>
            <person name="Vora S.M."/>
            <person name="Wang L."/>
            <person name="Fu T.M."/>
            <person name="Jacobson M.P."/>
            <person name="Greka A."/>
            <person name="Lieberman J."/>
            <person name="Ruan J."/>
            <person name="Wu H."/>
        </authorList>
    </citation>
    <scope>STRUCTURE BY ELECTRON MICROSCOPY (3.90 ANGSTROMS) OF 1-241</scope>
    <scope>SUBCELLULAR LOCATION</scope>
    <scope>SUBUNIT</scope>
    <scope>MUTAGENESIS OF 42-ARG--ARG-53; 48-TRP--TRP-50; 63-ASP--ASP-73; 87-ASP--GLU-95; ARG-174 AND LYS-204</scope>
</reference>
<reference evidence="52" key="45">
    <citation type="journal article" date="2023" name="Nat. Commun.">
        <title>Pyroptosis inhibiting nanobodies block Gasdermin D pore formation.</title>
        <authorList>
            <person name="Kopp A."/>
            <person name="Hagelueken G."/>
            <person name="Jamitzky I."/>
            <person name="Moecking J."/>
            <person name="Schiffelers L.D.J."/>
            <person name="Schmidt F.I."/>
            <person name="Geyer M."/>
        </authorList>
    </citation>
    <scope>X-RAY CRYSTALLOGRAPHY (1.86 ANGSTROMS) IN COMPLEX WITH VHH NANOBODY</scope>
    <scope>FUNCTION</scope>
    <scope>SUBUNIT</scope>
    <scope>ACTIVITY REGULATION</scope>
</reference>
<evidence type="ECO:0000250" key="1">
    <source>
        <dbReference type="UniProtKB" id="Q5Y4Y6"/>
    </source>
</evidence>
<evidence type="ECO:0000250" key="2">
    <source>
        <dbReference type="UniProtKB" id="Q9D8T2"/>
    </source>
</evidence>
<evidence type="ECO:0000269" key="3">
    <source>
    </source>
</evidence>
<evidence type="ECO:0000269" key="4">
    <source>
    </source>
</evidence>
<evidence type="ECO:0000269" key="5">
    <source>
    </source>
</evidence>
<evidence type="ECO:0000269" key="6">
    <source>
    </source>
</evidence>
<evidence type="ECO:0000269" key="7">
    <source>
    </source>
</evidence>
<evidence type="ECO:0000269" key="8">
    <source>
    </source>
</evidence>
<evidence type="ECO:0000269" key="9">
    <source>
    </source>
</evidence>
<evidence type="ECO:0000269" key="10">
    <source>
    </source>
</evidence>
<evidence type="ECO:0000269" key="11">
    <source>
    </source>
</evidence>
<evidence type="ECO:0000269" key="12">
    <source>
    </source>
</evidence>
<evidence type="ECO:0000269" key="13">
    <source>
    </source>
</evidence>
<evidence type="ECO:0000269" key="14">
    <source>
    </source>
</evidence>
<evidence type="ECO:0000269" key="15">
    <source>
    </source>
</evidence>
<evidence type="ECO:0000269" key="16">
    <source>
    </source>
</evidence>
<evidence type="ECO:0000269" key="17">
    <source>
    </source>
</evidence>
<evidence type="ECO:0000269" key="18">
    <source>
    </source>
</evidence>
<evidence type="ECO:0000269" key="19">
    <source>
    </source>
</evidence>
<evidence type="ECO:0000269" key="20">
    <source>
    </source>
</evidence>
<evidence type="ECO:0000269" key="21">
    <source>
    </source>
</evidence>
<evidence type="ECO:0000269" key="22">
    <source>
    </source>
</evidence>
<evidence type="ECO:0000269" key="23">
    <source>
    </source>
</evidence>
<evidence type="ECO:0000269" key="24">
    <source>
    </source>
</evidence>
<evidence type="ECO:0000269" key="25">
    <source>
    </source>
</evidence>
<evidence type="ECO:0000269" key="26">
    <source>
    </source>
</evidence>
<evidence type="ECO:0000269" key="27">
    <source>
    </source>
</evidence>
<evidence type="ECO:0000269" key="28">
    <source>
    </source>
</evidence>
<evidence type="ECO:0000269" key="29">
    <source>
    </source>
</evidence>
<evidence type="ECO:0000269" key="30">
    <source>
    </source>
</evidence>
<evidence type="ECO:0000269" key="31">
    <source>
    </source>
</evidence>
<evidence type="ECO:0000269" key="32">
    <source>
    </source>
</evidence>
<evidence type="ECO:0000269" key="33">
    <source>
    </source>
</evidence>
<evidence type="ECO:0000303" key="34">
    <source>
    </source>
</evidence>
<evidence type="ECO:0000303" key="35">
    <source>
    </source>
</evidence>
<evidence type="ECO:0000303" key="36">
    <source>
    </source>
</evidence>
<evidence type="ECO:0000303" key="37">
    <source>
    </source>
</evidence>
<evidence type="ECO:0000303" key="38">
    <source>
    </source>
</evidence>
<evidence type="ECO:0000303" key="39">
    <source>
    </source>
</evidence>
<evidence type="ECO:0000303" key="40">
    <source ref="1"/>
</evidence>
<evidence type="ECO:0000305" key="41"/>
<evidence type="ECO:0000305" key="42">
    <source>
    </source>
</evidence>
<evidence type="ECO:0000305" key="43">
    <source>
    </source>
</evidence>
<evidence type="ECO:0000305" key="44">
    <source>
    </source>
</evidence>
<evidence type="ECO:0000305" key="45">
    <source>
    </source>
</evidence>
<evidence type="ECO:0000312" key="46">
    <source>
        <dbReference type="HGNC" id="HGNC:25697"/>
    </source>
</evidence>
<evidence type="ECO:0007744" key="47">
    <source>
        <dbReference type="PDB" id="5WQT"/>
    </source>
</evidence>
<evidence type="ECO:0007744" key="48">
    <source>
        <dbReference type="PDB" id="6AO4"/>
    </source>
</evidence>
<evidence type="ECO:0007744" key="49">
    <source>
        <dbReference type="PDB" id="6KN0"/>
    </source>
</evidence>
<evidence type="ECO:0007744" key="50">
    <source>
        <dbReference type="PDB" id="6N9O"/>
    </source>
</evidence>
<evidence type="ECO:0007744" key="51">
    <source>
        <dbReference type="PDB" id="6VFE"/>
    </source>
</evidence>
<evidence type="ECO:0007744" key="52">
    <source>
        <dbReference type="PDB" id="7Z1X"/>
    </source>
</evidence>
<evidence type="ECO:0007744" key="53">
    <source>
    </source>
</evidence>
<evidence type="ECO:0007744" key="54">
    <source>
    </source>
</evidence>
<evidence type="ECO:0007829" key="55">
    <source>
        <dbReference type="PDB" id="6AO4"/>
    </source>
</evidence>
<evidence type="ECO:0007829" key="56">
    <source>
        <dbReference type="PDB" id="6KN0"/>
    </source>
</evidence>
<evidence type="ECO:0007829" key="57">
    <source>
        <dbReference type="PDB" id="6N9O"/>
    </source>
</evidence>
<evidence type="ECO:0007829" key="58">
    <source>
        <dbReference type="PDB" id="7Z1X"/>
    </source>
</evidence>
<keyword id="KW-0002">3D-structure</keyword>
<keyword id="KW-1003">Cell membrane</keyword>
<keyword id="KW-0963">Cytoplasm</keyword>
<keyword id="KW-0903">Direct protein sequencing</keyword>
<keyword id="KW-0325">Glycoprotein</keyword>
<keyword id="KW-0391">Immunity</keyword>
<keyword id="KW-1271">Inflammasome</keyword>
<keyword id="KW-0395">Inflammatory response</keyword>
<keyword id="KW-0399">Innate immunity</keyword>
<keyword id="KW-0446">Lipid-binding</keyword>
<keyword id="KW-0449">Lipoprotein</keyword>
<keyword id="KW-0472">Membrane</keyword>
<keyword id="KW-0496">Mitochondrion</keyword>
<keyword id="KW-1210">Necrosis</keyword>
<keyword id="KW-0539">Nucleus</keyword>
<keyword id="KW-0564">Palmitate</keyword>
<keyword id="KW-0597">Phosphoprotein</keyword>
<keyword id="KW-1267">Proteomics identification</keyword>
<keyword id="KW-1185">Reference proteome</keyword>
<keyword id="KW-0964">Secreted</keyword>
<keyword id="KW-0804">Transcription</keyword>
<keyword id="KW-0805">Transcription regulation</keyword>
<keyword id="KW-0812">Transmembrane</keyword>
<keyword id="KW-1134">Transmembrane beta strand</keyword>
<keyword id="KW-0832">Ubl conjugation</keyword>
<dbReference type="EMBL" id="AY008304">
    <property type="protein sequence ID" value="AAG22861.1"/>
    <property type="molecule type" value="mRNA"/>
</dbReference>
<dbReference type="EMBL" id="AK022212">
    <property type="protein sequence ID" value="BAB13986.1"/>
    <property type="molecule type" value="mRNA"/>
</dbReference>
<dbReference type="EMBL" id="AK291817">
    <property type="protein sequence ID" value="BAF84506.1"/>
    <property type="molecule type" value="mRNA"/>
</dbReference>
<dbReference type="EMBL" id="AC067930">
    <property type="status" value="NOT_ANNOTATED_CDS"/>
    <property type="molecule type" value="Genomic_DNA"/>
</dbReference>
<dbReference type="EMBL" id="CH471162">
    <property type="protein sequence ID" value="EAW82243.1"/>
    <property type="molecule type" value="Genomic_DNA"/>
</dbReference>
<dbReference type="EMBL" id="CH471162">
    <property type="protein sequence ID" value="EAW82245.1"/>
    <property type="molecule type" value="Genomic_DNA"/>
</dbReference>
<dbReference type="EMBL" id="BC008904">
    <property type="protein sequence ID" value="AAH08904.1"/>
    <property type="molecule type" value="mRNA"/>
</dbReference>
<dbReference type="EMBL" id="BC069000">
    <property type="protein sequence ID" value="AAH69000.1"/>
    <property type="molecule type" value="mRNA"/>
</dbReference>
<dbReference type="CCDS" id="CCDS34956.1"/>
<dbReference type="RefSeq" id="NP_001159709.1">
    <property type="nucleotide sequence ID" value="NM_001166237.1"/>
</dbReference>
<dbReference type="RefSeq" id="NP_079012.3">
    <property type="nucleotide sequence ID" value="NM_024736.6"/>
</dbReference>
<dbReference type="PDB" id="5NH1">
    <property type="method" value="X-ray"/>
    <property type="resolution" value="2.04 A"/>
    <property type="chains" value="A=278-484"/>
</dbReference>
<dbReference type="PDB" id="5WQT">
    <property type="method" value="X-ray"/>
    <property type="resolution" value="2.64 A"/>
    <property type="chains" value="A/B=276-484"/>
</dbReference>
<dbReference type="PDB" id="6AO4">
    <property type="method" value="X-ray"/>
    <property type="resolution" value="2.90 A"/>
    <property type="chains" value="A=277-484"/>
</dbReference>
<dbReference type="PDB" id="6KN0">
    <property type="method" value="X-ray"/>
    <property type="resolution" value="2.79 A"/>
    <property type="chains" value="E/F=283-480"/>
</dbReference>
<dbReference type="PDB" id="6N9O">
    <property type="method" value="X-ray"/>
    <property type="resolution" value="3.50 A"/>
    <property type="chains" value="A/B/C/D=1-484"/>
</dbReference>
<dbReference type="PDB" id="6VFE">
    <property type="method" value="EM"/>
    <property type="resolution" value="3.90 A"/>
    <property type="chains" value="A/B/C/D/E/F/G/H/I/J/K/L/M/N/O/P/Q/R/S/T/U/V/W/X/Y/Z/a/b/c/d=1-241"/>
</dbReference>
<dbReference type="PDB" id="7Z1X">
    <property type="method" value="X-ray"/>
    <property type="resolution" value="1.86 A"/>
    <property type="chains" value="A/D=1-484"/>
</dbReference>
<dbReference type="PDBsum" id="5NH1"/>
<dbReference type="PDBsum" id="5WQT"/>
<dbReference type="PDBsum" id="6AO4"/>
<dbReference type="PDBsum" id="6KN0"/>
<dbReference type="PDBsum" id="6N9O"/>
<dbReference type="PDBsum" id="6VFE"/>
<dbReference type="PDBsum" id="7Z1X"/>
<dbReference type="EMDB" id="EMD-21160"/>
<dbReference type="SMR" id="P57764"/>
<dbReference type="BioGRID" id="122891">
    <property type="interactions" value="26"/>
</dbReference>
<dbReference type="DIP" id="DIP-61775N"/>
<dbReference type="FunCoup" id="P57764">
    <property type="interactions" value="325"/>
</dbReference>
<dbReference type="IntAct" id="P57764">
    <property type="interactions" value="17"/>
</dbReference>
<dbReference type="STRING" id="9606.ENSP00000433209"/>
<dbReference type="ChEMBL" id="CHEMBL4523247"/>
<dbReference type="DrugCentral" id="P57764"/>
<dbReference type="TCDB" id="1.C.123.1.1">
    <property type="family name" value="the pore-forming gasdermin (gasdermin) family"/>
</dbReference>
<dbReference type="GlyGen" id="P57764">
    <property type="glycosylation" value="1 site, 1 O-linked glycan (1 site)"/>
</dbReference>
<dbReference type="iPTMnet" id="P57764"/>
<dbReference type="PhosphoSitePlus" id="P57764"/>
<dbReference type="SwissPalm" id="P57764"/>
<dbReference type="BioMuta" id="GSDMD"/>
<dbReference type="DMDM" id="13124058"/>
<dbReference type="jPOST" id="P57764"/>
<dbReference type="MassIVE" id="P57764"/>
<dbReference type="PaxDb" id="9606-ENSP00000433209"/>
<dbReference type="PeptideAtlas" id="P57764"/>
<dbReference type="ProteomicsDB" id="57029"/>
<dbReference type="ABCD" id="P57764">
    <property type="antibodies" value="1 sequenced antibody"/>
</dbReference>
<dbReference type="Antibodypedia" id="27909">
    <property type="antibodies" value="186 antibodies from 31 providers"/>
</dbReference>
<dbReference type="DNASU" id="79792"/>
<dbReference type="Ensembl" id="ENST00000262580.9">
    <property type="protein sequence ID" value="ENSP00000262580.4"/>
    <property type="gene ID" value="ENSG00000104518.11"/>
</dbReference>
<dbReference type="Ensembl" id="ENST00000526406.5">
    <property type="protein sequence ID" value="ENSP00000433209.1"/>
    <property type="gene ID" value="ENSG00000104518.11"/>
</dbReference>
<dbReference type="Ensembl" id="ENST00000615119.2">
    <property type="protein sequence ID" value="ENSP00000482096.1"/>
    <property type="gene ID" value="ENSG00000278718.3"/>
</dbReference>
<dbReference type="Ensembl" id="ENST00000631751.1">
    <property type="protein sequence ID" value="ENSP00000488012.1"/>
    <property type="gene ID" value="ENSG00000278718.3"/>
</dbReference>
<dbReference type="GeneID" id="79792"/>
<dbReference type="KEGG" id="hsa:79792"/>
<dbReference type="MANE-Select" id="ENST00000262580.9">
    <property type="protein sequence ID" value="ENSP00000262580.4"/>
    <property type="RefSeq nucleotide sequence ID" value="NM_024736.7"/>
    <property type="RefSeq protein sequence ID" value="NP_079012.3"/>
</dbReference>
<dbReference type="UCSC" id="uc003yyg.4">
    <property type="organism name" value="human"/>
</dbReference>
<dbReference type="AGR" id="HGNC:25697"/>
<dbReference type="CTD" id="79792"/>
<dbReference type="DisGeNET" id="79792"/>
<dbReference type="GeneCards" id="GSDMD"/>
<dbReference type="HGNC" id="HGNC:25697">
    <property type="gene designation" value="GSDMD"/>
</dbReference>
<dbReference type="HPA" id="ENSG00000104518">
    <property type="expression patterns" value="Low tissue specificity"/>
</dbReference>
<dbReference type="MIM" id="617042">
    <property type="type" value="gene"/>
</dbReference>
<dbReference type="neXtProt" id="NX_P57764"/>
<dbReference type="OpenTargets" id="ENSG00000104518"/>
<dbReference type="PharmGKB" id="PA162390357"/>
<dbReference type="VEuPathDB" id="HostDB:ENSG00000104518"/>
<dbReference type="eggNOG" id="ENOG502S0IQ">
    <property type="taxonomic scope" value="Eukaryota"/>
</dbReference>
<dbReference type="GeneTree" id="ENSGT00950000183140"/>
<dbReference type="HOGENOM" id="CLU_040752_1_0_1"/>
<dbReference type="InParanoid" id="P57764"/>
<dbReference type="OMA" id="WTLLEEC"/>
<dbReference type="OrthoDB" id="9035105at2759"/>
<dbReference type="PAN-GO" id="P57764">
    <property type="GO annotations" value="6 GO annotations based on evolutionary models"/>
</dbReference>
<dbReference type="PhylomeDB" id="P57764"/>
<dbReference type="TreeFam" id="TF331886"/>
<dbReference type="BioCyc" id="MetaCyc:ENSG00000104518-MONOMER"/>
<dbReference type="PathwayCommons" id="P57764"/>
<dbReference type="Reactome" id="R-HSA-111457">
    <property type="pathway name" value="Release of apoptotic factors from the mitochondria"/>
</dbReference>
<dbReference type="Reactome" id="R-HSA-448706">
    <property type="pathway name" value="Interleukin-1 processing"/>
</dbReference>
<dbReference type="Reactome" id="R-HSA-5620971">
    <property type="pathway name" value="Pyroptosis"/>
</dbReference>
<dbReference type="Reactome" id="R-HSA-5686938">
    <property type="pathway name" value="Regulation of TLR by endogenous ligand"/>
</dbReference>
<dbReference type="Reactome" id="R-HSA-6798695">
    <property type="pathway name" value="Neutrophil degranulation"/>
</dbReference>
<dbReference type="Reactome" id="R-HSA-9660826">
    <property type="pathway name" value="Purinergic signaling in leishmaniasis infection"/>
</dbReference>
<dbReference type="SignaLink" id="P57764"/>
<dbReference type="SIGNOR" id="P57764"/>
<dbReference type="BioGRID-ORCS" id="79792">
    <property type="hits" value="28 hits in 1161 CRISPR screens"/>
</dbReference>
<dbReference type="ChiTaRS" id="GSDMD">
    <property type="organism name" value="human"/>
</dbReference>
<dbReference type="GenomeRNAi" id="79792"/>
<dbReference type="Pharos" id="P57764">
    <property type="development level" value="Tchem"/>
</dbReference>
<dbReference type="PRO" id="PR:P57764"/>
<dbReference type="Proteomes" id="UP000005640">
    <property type="component" value="Chromosome 8"/>
</dbReference>
<dbReference type="RNAct" id="P57764">
    <property type="molecule type" value="protein"/>
</dbReference>
<dbReference type="Bgee" id="ENSG00000104518">
    <property type="expression patterns" value="Expressed in spleen and 97 other cell types or tissues"/>
</dbReference>
<dbReference type="ExpressionAtlas" id="P57764">
    <property type="expression patterns" value="baseline and differential"/>
</dbReference>
<dbReference type="GO" id="GO:0005829">
    <property type="term" value="C:cytosol"/>
    <property type="evidence" value="ECO:0000250"/>
    <property type="project" value="UniProtKB"/>
</dbReference>
<dbReference type="GO" id="GO:0005576">
    <property type="term" value="C:extracellular region"/>
    <property type="evidence" value="ECO:0000304"/>
    <property type="project" value="Reactome"/>
</dbReference>
<dbReference type="GO" id="GO:0005615">
    <property type="term" value="C:extracellular space"/>
    <property type="evidence" value="ECO:0000250"/>
    <property type="project" value="UniProtKB"/>
</dbReference>
<dbReference type="GO" id="GO:1904813">
    <property type="term" value="C:ficolin-1-rich granule lumen"/>
    <property type="evidence" value="ECO:0000304"/>
    <property type="project" value="Reactome"/>
</dbReference>
<dbReference type="GO" id="GO:0016020">
    <property type="term" value="C:membrane"/>
    <property type="evidence" value="ECO:0000314"/>
    <property type="project" value="UniProt"/>
</dbReference>
<dbReference type="GO" id="GO:0031966">
    <property type="term" value="C:mitochondrial membrane"/>
    <property type="evidence" value="ECO:0000250"/>
    <property type="project" value="UniProtKB"/>
</dbReference>
<dbReference type="GO" id="GO:0072559">
    <property type="term" value="C:NLRP3 inflammasome complex"/>
    <property type="evidence" value="ECO:0000250"/>
    <property type="project" value="UniProtKB"/>
</dbReference>
<dbReference type="GO" id="GO:0005654">
    <property type="term" value="C:nucleoplasm"/>
    <property type="evidence" value="ECO:0000314"/>
    <property type="project" value="HPA"/>
</dbReference>
<dbReference type="GO" id="GO:0005886">
    <property type="term" value="C:plasma membrane"/>
    <property type="evidence" value="ECO:0000314"/>
    <property type="project" value="UniProt"/>
</dbReference>
<dbReference type="GO" id="GO:0035580">
    <property type="term" value="C:specific granule lumen"/>
    <property type="evidence" value="ECO:0000304"/>
    <property type="project" value="Reactome"/>
</dbReference>
<dbReference type="GO" id="GO:1904724">
    <property type="term" value="C:tertiary granule lumen"/>
    <property type="evidence" value="ECO:0000304"/>
    <property type="project" value="Reactome"/>
</dbReference>
<dbReference type="GO" id="GO:1901612">
    <property type="term" value="F:cardiolipin binding"/>
    <property type="evidence" value="ECO:0000250"/>
    <property type="project" value="UniProtKB"/>
</dbReference>
<dbReference type="GO" id="GO:0070300">
    <property type="term" value="F:phosphatidic acid binding"/>
    <property type="evidence" value="ECO:0000250"/>
    <property type="project" value="UniProtKB"/>
</dbReference>
<dbReference type="GO" id="GO:0005546">
    <property type="term" value="F:phosphatidylinositol-4,5-bisphosphate binding"/>
    <property type="evidence" value="ECO:0000314"/>
    <property type="project" value="UniProt"/>
</dbReference>
<dbReference type="GO" id="GO:0070273">
    <property type="term" value="F:phosphatidylinositol-4-phosphate binding"/>
    <property type="evidence" value="ECO:0000314"/>
    <property type="project" value="UniProt"/>
</dbReference>
<dbReference type="GO" id="GO:0001786">
    <property type="term" value="F:phosphatidylserine binding"/>
    <property type="evidence" value="ECO:0000250"/>
    <property type="project" value="UniProtKB"/>
</dbReference>
<dbReference type="GO" id="GO:0022829">
    <property type="term" value="F:wide pore channel activity"/>
    <property type="evidence" value="ECO:0000314"/>
    <property type="project" value="UniProt"/>
</dbReference>
<dbReference type="GO" id="GO:0042742">
    <property type="term" value="P:defense response to bacterium"/>
    <property type="evidence" value="ECO:0000318"/>
    <property type="project" value="GO_Central"/>
</dbReference>
<dbReference type="GO" id="GO:0050829">
    <property type="term" value="P:defense response to Gram-negative bacterium"/>
    <property type="evidence" value="ECO:0000250"/>
    <property type="project" value="UniProtKB"/>
</dbReference>
<dbReference type="GO" id="GO:0050830">
    <property type="term" value="P:defense response to Gram-positive bacterium"/>
    <property type="evidence" value="ECO:0000250"/>
    <property type="project" value="UniProtKB"/>
</dbReference>
<dbReference type="GO" id="GO:0045087">
    <property type="term" value="P:innate immune response"/>
    <property type="evidence" value="ECO:0007669"/>
    <property type="project" value="UniProtKB-KW"/>
</dbReference>
<dbReference type="GO" id="GO:0046931">
    <property type="term" value="P:pore complex assembly"/>
    <property type="evidence" value="ECO:0000250"/>
    <property type="project" value="UniProtKB"/>
</dbReference>
<dbReference type="GO" id="GO:0050729">
    <property type="term" value="P:positive regulation of inflammatory response"/>
    <property type="evidence" value="ECO:0000314"/>
    <property type="project" value="UniProt"/>
</dbReference>
<dbReference type="GO" id="GO:0032731">
    <property type="term" value="P:positive regulation of interleukin-1 beta production"/>
    <property type="evidence" value="ECO:0000250"/>
    <property type="project" value="UniProtKB"/>
</dbReference>
<dbReference type="GO" id="GO:0051260">
    <property type="term" value="P:protein homooligomerization"/>
    <property type="evidence" value="ECO:0000250"/>
    <property type="project" value="UniProtKB"/>
</dbReference>
<dbReference type="GO" id="GO:0009306">
    <property type="term" value="P:protein secretion"/>
    <property type="evidence" value="ECO:0000314"/>
    <property type="project" value="UniProt"/>
</dbReference>
<dbReference type="GO" id="GO:0141201">
    <property type="term" value="P:pyroptotic cell death"/>
    <property type="evidence" value="ECO:0000314"/>
    <property type="project" value="UniProt"/>
</dbReference>
<dbReference type="GO" id="GO:0070269">
    <property type="term" value="P:pyroptotic inflammatory response"/>
    <property type="evidence" value="ECO:0000314"/>
    <property type="project" value="UniProt"/>
</dbReference>
<dbReference type="InterPro" id="IPR007677">
    <property type="entry name" value="Gasdermin"/>
</dbReference>
<dbReference type="InterPro" id="IPR040460">
    <property type="entry name" value="Gasdermin_pore"/>
</dbReference>
<dbReference type="InterPro" id="IPR041263">
    <property type="entry name" value="Gasdermin_PUB"/>
</dbReference>
<dbReference type="PANTHER" id="PTHR16399">
    <property type="entry name" value="GASDERMIN"/>
    <property type="match status" value="1"/>
</dbReference>
<dbReference type="PANTHER" id="PTHR16399:SF15">
    <property type="entry name" value="GASDERMIN-D"/>
    <property type="match status" value="1"/>
</dbReference>
<dbReference type="Pfam" id="PF04598">
    <property type="entry name" value="Gasdermin"/>
    <property type="match status" value="1"/>
</dbReference>
<dbReference type="Pfam" id="PF17708">
    <property type="entry name" value="Gasdermin_C"/>
    <property type="match status" value="1"/>
</dbReference>
<gene>
    <name evidence="35 46" type="primary">GSDMD</name>
    <name evidence="34" type="synonym">DFNA5L</name>
    <name evidence="34" type="synonym">GSDMDC1</name>
    <name evidence="40" type="ORF">FKSG10</name>
</gene>
<accession>P57764</accession>
<accession>A8K702</accession>
<accession>D3DWJ9</accession>
<accession>Q96Q98</accession>
<sequence length="484" mass="52801">MGSAFERVVRRVVQELDHGGEFIPVTSLQSSTGFQPYCLVVRKPSSSWFWKPRYKCVNLSIKDILEPDAAEPDVQRGRSFHFYDAMDGQIQGSVELAAPGQAKIAGGAAVSDSSSTSMNVYSLSVDPNTWQTLLHERHLRQPEHKVLQQLRSRGDNVYVVTEVLQTQKEVEVTRTHKREGSGRFSLPGATCLQGEGQGHLSQKKTVTIPSGSTLAFRVAQLVIDSDLDVLLFPDKKQRTFQPPATGHKRSTSEGAWPQLPSGLSMMRCLHNFLTDGVPAEGAFTEDFQGLRAEVETISKELELLDRELCQLLLEGLEGVLRDQLALRALEEALEQGQSLGPVEPLDGPAGAVLECLVLSSGMLVPELAIPVVYLLGALTMLSETQHKLLAEALESQTLLGPLELVGSLLEQSAPWQERSTMSLPPGLLGNSWGEGAPAWVLLDECGLELGEDTPHVCWEPQAQGRMCALYASLALLSGLSQEPH</sequence>
<feature type="chain" id="PRO_0000148175" description="Gasdermin-D">
    <location>
        <begin position="1"/>
        <end position="484"/>
    </location>
</feature>
<feature type="chain" id="PRO_0000459018" description="Gasdermin-D, p40" evidence="44">
    <location>
        <begin position="1"/>
        <end position="290"/>
    </location>
</feature>
<feature type="chain" id="PRO_0000437526" description="Gasdermin-D, N-terminal" evidence="42">
    <location>
        <begin position="1"/>
        <end position="275"/>
    </location>
</feature>
<feature type="chain" id="PRO_0000459017" description="Gasdermin-D, p13" evidence="45">
    <location>
        <begin position="1"/>
        <end position="87"/>
    </location>
</feature>
<feature type="chain" id="PRO_0000437527" description="Gasdermin-D, C-terminal" evidence="42">
    <location>
        <begin position="276"/>
        <end position="484"/>
    </location>
</feature>
<feature type="transmembrane region" description="Beta stranded" evidence="18 51">
    <location>
        <begin position="91"/>
        <end position="97"/>
    </location>
</feature>
<feature type="transmembrane region" description="Beta stranded" evidence="18 51">
    <location>
        <begin position="103"/>
        <end position="108"/>
    </location>
</feature>
<feature type="transmembrane region" description="Beta stranded" evidence="18 51">
    <location>
        <begin position="180"/>
        <end position="186"/>
    </location>
</feature>
<feature type="transmembrane region" description="Beta stranded" evidence="18 51">
    <location>
        <begin position="191"/>
        <end position="197"/>
    </location>
</feature>
<feature type="region of interest" description="Linker helix loop" evidence="11">
    <location>
        <begin position="277"/>
        <end position="296"/>
    </location>
</feature>
<feature type="site" description="Cleavage; by CASP3 or CASP7" evidence="8 9 28">
    <location>
        <begin position="87"/>
        <end position="88"/>
    </location>
</feature>
<feature type="site" description="Cleavage; by enterovirus 71 (EV71) Protease 3C and coronavirus SARS-CoV-2 proteinase nsp5" evidence="10 21">
    <location>
        <begin position="193"/>
        <end position="194"/>
    </location>
</feature>
<feature type="site" description="Cleavage; by caspases CASP1, CASP4, CASP5 and CASP8" evidence="4 15 33 43">
    <location>
        <begin position="275"/>
        <end position="276"/>
    </location>
</feature>
<feature type="site" description="Cleavage; by papain" evidence="22">
    <location>
        <begin position="290"/>
        <end position="291"/>
    </location>
</feature>
<feature type="modified residue" description="Phosphotyrosine" evidence="53">
    <location>
        <position position="37"/>
    </location>
</feature>
<feature type="modified residue" description="S-(2-succinyl)cysteine" evidence="16">
    <location>
        <position position="56"/>
    </location>
</feature>
<feature type="modified residue" description="Phosphotyrosine" evidence="53">
    <location>
        <position position="158"/>
    </location>
</feature>
<feature type="modified residue" description="Phosphoserine" evidence="54">
    <location>
        <position position="185"/>
    </location>
</feature>
<feature type="modified residue" description="S-(2-succinyl)cysteine" evidence="16">
    <location>
        <position position="191"/>
    </location>
</feature>
<feature type="modified residue" description="S-(2-succinyl)cysteine" evidence="16">
    <location>
        <position position="268"/>
    </location>
</feature>
<feature type="modified residue" description="S-(2-succinyl)cysteine" evidence="16">
    <location>
        <position position="309"/>
    </location>
</feature>
<feature type="modified residue" description="S-(2-succinyl)cysteine" evidence="16">
    <location>
        <position position="467"/>
    </location>
</feature>
<feature type="lipid moiety-binding region" description="S-palmitoyl cysteine" evidence="31 33">
    <location>
        <position position="191"/>
    </location>
</feature>
<feature type="glycosylation site" description="O-linked (GlcNAc) serine" evidence="29">
    <location>
        <position position="338"/>
    </location>
</feature>
<feature type="sequence variant" id="VAR_089418" description="Found in a patient with autism; uncertain significance; increased palmitoylation and pyroptosis." evidence="33">
    <original>V</original>
    <variation>A</variation>
    <location>
        <position position="41"/>
    </location>
</feature>
<feature type="mutagenesis site" description="Impaired pore-formation." evidence="13">
    <original>RVVRR</original>
    <variation>AVVAA</variation>
    <location>
        <begin position="7"/>
        <end position="11"/>
    </location>
</feature>
<feature type="mutagenesis site" description="No spontaneous pyroptosis-inducing activity; when associated with D-192." evidence="6 11">
    <original>E</original>
    <variation>K</variation>
    <location>
        <position position="15"/>
    </location>
</feature>
<feature type="mutagenesis site" description="Abolished ubiquitination by S.flexneri IpaH7.8." evidence="26">
    <original>LDHGGEF</original>
    <variation>VSGSRGD</variation>
    <location>
        <begin position="16"/>
        <end position="22"/>
    </location>
</feature>
<feature type="mutagenesis site" description="Abolished ability to form a pore." evidence="18">
    <original>RKPSSSWFWKPR</original>
    <variation>EEPSSSWFWEPE</variation>
    <location>
        <begin position="42"/>
        <end position="53"/>
    </location>
</feature>
<feature type="mutagenesis site" description="Abolished ability to form a pore." evidence="18">
    <original>WFW</original>
    <variation>GFG</variation>
    <location>
        <begin position="48"/>
        <end position="50"/>
    </location>
</feature>
<feature type="mutagenesis site" description="In AP1; promotes ability to release of interleukin-1 (IL1B and IL18) precursors." evidence="18">
    <original>DILEPDAAEPD</original>
    <variation>AILAPDAAAPA</variation>
    <location>
        <begin position="63"/>
        <end position="73"/>
    </location>
</feature>
<feature type="mutagenesis site" description="In AP2; promotes ability to release of interleukin-1 (IL1B and IL18) precursors." evidence="18">
    <original>DGQIQGSVE</original>
    <variation>AGQIQGSVA</variation>
    <location>
        <begin position="87"/>
        <end position="95"/>
    </location>
</feature>
<feature type="mutagenesis site" description="Decreased effectiveness in pore formation and pyroptosis induction. No effect on cleavage by CASP1." evidence="7">
    <original>I</original>
    <variation>N</variation>
    <location>
        <position position="104"/>
    </location>
</feature>
<feature type="mutagenesis site" description="Reduced ability to form a pore." evidence="18">
    <original>R</original>
    <variation>E</variation>
    <location>
        <position position="174"/>
    </location>
</feature>
<feature type="mutagenesis site" description="Abolished palmitoylation and ability to form a pore and mediate pyroptosis. Prevents binding to small molecule NU6300." evidence="31 33">
    <original>C</original>
    <variation>A</variation>
    <location>
        <position position="191"/>
    </location>
</feature>
<feature type="mutagenesis site" description="Decreased induction of pyroptosis and defects in liposome-binding. No spontaneous pyroptosis-inducing activity; when associated with K-15." evidence="6 11 23">
    <original>L</original>
    <variation>D</variation>
    <location>
        <position position="192"/>
    </location>
</feature>
<feature type="mutagenesis site" description="Abolished cleavage by enterovirus 71 (EV71) Protease 3C and human coronavirus SARS-CoV-2 3C-like proteinase nsp5." evidence="10 21">
    <original>Q</original>
    <variation>A</variation>
    <location>
        <position position="193"/>
    </location>
</feature>
<feature type="mutagenesis site" description="Reduced ability to form a pore." evidence="18">
    <original>K</original>
    <variation>E</variation>
    <location>
        <position position="204"/>
    </location>
</feature>
<feature type="mutagenesis site" description="Does not affect ability to induce pyroptosis." evidence="10">
    <original>D</original>
    <variation>K</variation>
    <location>
        <position position="234"/>
    </location>
</feature>
<feature type="mutagenesis site" description="Does not affect ability to induce pyroptosis." evidence="10">
    <original>K</original>
    <variation>D</variation>
    <location>
        <position position="235"/>
    </location>
</feature>
<feature type="mutagenesis site" description="Does not affect ability to induce pyroptosis." evidence="10">
    <original>K</original>
    <variation>D</variation>
    <location>
        <position position="236"/>
    </location>
</feature>
<feature type="mutagenesis site" description="Does not affect ability to induce pyroptosis." evidence="10">
    <original>Q</original>
    <variation>D</variation>
    <location>
        <position position="237"/>
    </location>
</feature>
<feature type="mutagenesis site" description="Does not affect ability to induce pyroptosis." evidence="10">
    <original>R</original>
    <variation>D</variation>
    <location>
        <position position="238"/>
    </location>
</feature>
<feature type="mutagenesis site" description="Abolished ability to induce pyroptosis." evidence="10">
    <original>T</original>
    <variation>D</variation>
    <location>
        <position position="239"/>
    </location>
</feature>
<feature type="mutagenesis site" description="Abolished ability to induce pyroptosis." evidence="10">
    <original>F</original>
    <variation>D</variation>
    <location>
        <position position="240"/>
    </location>
</feature>
<feature type="mutagenesis site" description="Does not affect ability to induce pyroptosis." evidence="10">
    <original>Q</original>
    <variation>D</variation>
    <location>
        <position position="241"/>
    </location>
</feature>
<feature type="mutagenesis site" description="Does not affect ability to induce pyroptosis." evidence="10">
    <original>P</original>
    <variation>D</variation>
    <location>
        <position position="242"/>
    </location>
</feature>
<feature type="mutagenesis site" description="Does not affect ability to induce pyroptosis." evidence="10">
    <original>P</original>
    <variation>D</variation>
    <location>
        <position position="243"/>
    </location>
</feature>
<feature type="mutagenesis site" description="Does not affect interaction with CASP4." evidence="15">
    <original>FLT</original>
    <variation>AAA</variation>
    <location>
        <begin position="272"/>
        <end position="274"/>
    </location>
</feature>
<feature type="mutagenesis site" description="Loss of cleavage by CASP1 and CASP4 and of LPS-induced pyroptosis. Does not affect interaction with CASP1 and CASP4." evidence="4 15 33">
    <original>D</original>
    <variation>A</variation>
    <location>
        <position position="275"/>
    </location>
</feature>
<feature type="mutagenesis site" description="Constitutively active mutant; promotes activation of pyroptosis." evidence="11">
    <original>VPAEGAFTEDFQGLRAEVET</original>
    <variation>SGGGS</variation>
    <location>
        <begin position="277"/>
        <end position="296"/>
    </location>
</feature>
<feature type="mutagenesis site" description="Constitutively active mutant; promotes activation of pyroptosis." evidence="11">
    <original>F</original>
    <variation>A</variation>
    <variation>R</variation>
    <location>
        <position position="283"/>
    </location>
</feature>
<feature type="mutagenesis site" description="No effect." evidence="11">
    <original>F</original>
    <variation>Y</variation>
    <location>
        <position position="283"/>
    </location>
</feature>
<feature type="mutagenesis site" description="Abolished generation of the Gasdermin-D, p40 chain and ability to promote secretion of IL33." evidence="22">
    <original>QGLR</original>
    <variation>AAA</variation>
    <location>
        <begin position="288"/>
        <end position="291"/>
    </location>
</feature>
<feature type="mutagenesis site" description="Spontaneous pyroptosis-inducing activity." evidence="6">
    <original>L</original>
    <variation>D</variation>
    <location>
        <position position="290"/>
    </location>
</feature>
<feature type="mutagenesis site" description="Impairs interaction with CASP1 and CASP4 and subsequent cleavage." evidence="15">
    <original>LDREL</original>
    <variation>ADREA</variation>
    <location>
        <begin position="304"/>
        <end position="308"/>
    </location>
</feature>
<feature type="mutagenesis site" description="Does not affect cleavage by enterovirus 71 (EV71) Protease 3C." evidence="10">
    <original>Q</original>
    <variation>A</variation>
    <location>
        <position position="335"/>
    </location>
</feature>
<feature type="mutagenesis site" description="Abolished O-GlcNAcylation, leading to increased association with CASP4." evidence="29">
    <original>S</original>
    <variation>A</variation>
    <location>
        <position position="338"/>
    </location>
</feature>
<feature type="mutagenesis site" description="Impairs interaction with CASP1 and CASP4 and subsequent cleavage." evidence="15">
    <original>VPEL</original>
    <variation>APEA</variation>
    <location>
        <begin position="364"/>
        <end position="367"/>
    </location>
</feature>
<feature type="mutagenesis site" description="Spontaneous pyroptosis-inducing activity." evidence="6">
    <original>Y</original>
    <variation>D</variation>
    <location>
        <position position="373"/>
    </location>
</feature>
<feature type="mutagenesis site" description="Spontaneous pyroptosis-inducing activity." evidence="6">
    <original>A</original>
    <variation>D</variation>
    <location>
        <position position="377"/>
    </location>
</feature>
<feature type="sequence conflict" description="In Ref. 1; AAG22861." evidence="41" ref="1">
    <original>SGMLVPELAIPVVYLLGALTMLSETQHKLLAEALESQTLLGPLELVGSLLEQSAPWQERSTMSLPPGLLGNSWGEGAPAWVLLDECGLELGEDTPHVCWEPQAQGRMCALYASLALLSGLSQEP</original>
    <variation>PECWCRNSLSLLSTCWG</variation>
    <location>
        <begin position="360"/>
        <end position="483"/>
    </location>
</feature>
<feature type="sequence conflict" description="In Ref. 2; BAF84506." evidence="41" ref="2">
    <original>H</original>
    <variation>R</variation>
    <location>
        <position position="386"/>
    </location>
</feature>
<feature type="helix" evidence="58">
    <location>
        <begin position="4"/>
        <end position="16"/>
    </location>
</feature>
<feature type="strand" evidence="58">
    <location>
        <begin position="18"/>
        <end position="20"/>
    </location>
</feature>
<feature type="turn" evidence="58">
    <location>
        <begin position="28"/>
        <end position="31"/>
    </location>
</feature>
<feature type="strand" evidence="58">
    <location>
        <begin position="38"/>
        <end position="42"/>
    </location>
</feature>
<feature type="strand" evidence="58">
    <location>
        <begin position="55"/>
        <end position="60"/>
    </location>
</feature>
<feature type="helix" evidence="58">
    <location>
        <begin position="61"/>
        <end position="64"/>
    </location>
</feature>
<feature type="strand" evidence="58">
    <location>
        <begin position="65"/>
        <end position="67"/>
    </location>
</feature>
<feature type="strand" evidence="58">
    <location>
        <begin position="75"/>
        <end position="81"/>
    </location>
</feature>
<feature type="strand" evidence="58">
    <location>
        <begin position="119"/>
        <end position="124"/>
    </location>
</feature>
<feature type="helix" evidence="58">
    <location>
        <begin position="127"/>
        <end position="136"/>
    </location>
</feature>
<feature type="helix" evidence="58">
    <location>
        <begin position="145"/>
        <end position="152"/>
    </location>
</feature>
<feature type="strand" evidence="58">
    <location>
        <begin position="156"/>
        <end position="166"/>
    </location>
</feature>
<feature type="strand" evidence="58">
    <location>
        <begin position="168"/>
        <end position="171"/>
    </location>
</feature>
<feature type="strand" evidence="58">
    <location>
        <begin position="206"/>
        <end position="208"/>
    </location>
</feature>
<feature type="strand" evidence="58">
    <location>
        <begin position="213"/>
        <end position="232"/>
    </location>
</feature>
<feature type="helix" evidence="58">
    <location>
        <begin position="286"/>
        <end position="298"/>
    </location>
</feature>
<feature type="helix" evidence="58">
    <location>
        <begin position="299"/>
        <end position="301"/>
    </location>
</feature>
<feature type="helix" evidence="58">
    <location>
        <begin position="306"/>
        <end position="320"/>
    </location>
</feature>
<feature type="helix" evidence="58">
    <location>
        <begin position="323"/>
        <end position="332"/>
    </location>
</feature>
<feature type="helix" evidence="58">
    <location>
        <begin position="348"/>
        <end position="354"/>
    </location>
</feature>
<feature type="strand" evidence="55">
    <location>
        <begin position="359"/>
        <end position="361"/>
    </location>
</feature>
<feature type="helix" evidence="58">
    <location>
        <begin position="365"/>
        <end position="379"/>
    </location>
</feature>
<feature type="helix" evidence="58">
    <location>
        <begin position="383"/>
        <end position="395"/>
    </location>
</feature>
<feature type="helix" evidence="58">
    <location>
        <begin position="399"/>
        <end position="412"/>
    </location>
</feature>
<feature type="strand" evidence="57">
    <location>
        <begin position="414"/>
        <end position="417"/>
    </location>
</feature>
<feature type="strand" evidence="58">
    <location>
        <begin position="420"/>
        <end position="422"/>
    </location>
</feature>
<feature type="turn" evidence="58">
    <location>
        <begin position="425"/>
        <end position="427"/>
    </location>
</feature>
<feature type="strand" evidence="56">
    <location>
        <begin position="429"/>
        <end position="431"/>
    </location>
</feature>
<feature type="helix" evidence="58">
    <location>
        <begin position="437"/>
        <end position="443"/>
    </location>
</feature>
<feature type="turn" evidence="58">
    <location>
        <begin position="444"/>
        <end position="446"/>
    </location>
</feature>
<feature type="strand" evidence="55">
    <location>
        <begin position="451"/>
        <end position="453"/>
    </location>
</feature>
<feature type="strand" evidence="58">
    <location>
        <begin position="454"/>
        <end position="457"/>
    </location>
</feature>
<feature type="helix" evidence="58">
    <location>
        <begin position="460"/>
        <end position="462"/>
    </location>
</feature>
<feature type="helix" evidence="58">
    <location>
        <begin position="463"/>
        <end position="480"/>
    </location>
</feature>
<organism>
    <name type="scientific">Homo sapiens</name>
    <name type="common">Human</name>
    <dbReference type="NCBI Taxonomy" id="9606"/>
    <lineage>
        <taxon>Eukaryota</taxon>
        <taxon>Metazoa</taxon>
        <taxon>Chordata</taxon>
        <taxon>Craniata</taxon>
        <taxon>Vertebrata</taxon>
        <taxon>Euteleostomi</taxon>
        <taxon>Mammalia</taxon>
        <taxon>Eutheria</taxon>
        <taxon>Euarchontoglires</taxon>
        <taxon>Primates</taxon>
        <taxon>Haplorrhini</taxon>
        <taxon>Catarrhini</taxon>
        <taxon>Hominidae</taxon>
        <taxon>Homo</taxon>
    </lineage>
</organism>
<name>GSDMD_HUMAN</name>
<proteinExistence type="evidence at protein level"/>
<comment type="function">
    <molecule>Gasdermin-D</molecule>
    <text evidence="4 5 6">Precursor of a pore-forming protein that plays a key role in host defense against pathogen infection and danger signals (PubMed:26375003, PubMed:26375259, PubMed:27281216). This form constitutes the precursor of the pore-forming protein: upon cleavage, the released N-terminal moiety (Gasdermin-D, N-terminal) binds to membranes and forms pores, triggering pyroptosis (PubMed:26375003, PubMed:26375259, PubMed:27281216).</text>
</comment>
<comment type="function">
    <molecule>Gasdermin-D, N-terminal</molecule>
    <text evidence="2 4 5 6 7 9 14 16 17 18 19 23 27 30 32 33">Promotes pyroptosis in response to microbial infection and danger signals (PubMed:26375003, PubMed:26375259, PubMed:27418190, PubMed:28392147, PubMed:32820063, PubMed:34289345, PubMed:38040708, PubMed:38530158, PubMed:38599239). Produced by the cleavage of gasdermin-D by inflammatory caspases CASP1, CASP4 or CASP5 in response to canonical, as well as non-canonical (such as cytosolic LPS) inflammasome activators (PubMed:26375003, PubMed:26375259, PubMed:27418190). After cleavage, moves to the plasma membrane where it strongly binds to inner leaflet lipids, including monophosphorylated phosphatidylinositols, such as phosphatidylinositol 4-phosphate, bisphosphorylated phosphatidylinositols, such as phosphatidylinositol (4,5)-bisphosphate, as well as phosphatidylinositol (3,4,5)-bisphosphate, and more weakly to phosphatidic acid and phosphatidylserine (PubMed:27281216, PubMed:29898893, PubMed:36227980). Homooligomerizes within the membrane and forms pores of 10-15 nanometers (nm) of inner diameter, allowing the release of mature interleukin-1 (IL1B and IL18) and triggering pyroptosis (PubMed:27281216, PubMed:27418190, PubMed:29898893, PubMed:33883744, PubMed:38040708, PubMed:38530158, PubMed:38599239). Gasdermin pores also allow the release of mature caspase-7 (CASP7) (By similarity). In some, but not all, cells types, pyroptosis is followed by pyroptotic cell death, which is caused by downstream activation of ninjurin-1 (NINJ1), which mediates membrane rupture (cytolysis) (PubMed:33472215, PubMed:37198476). Also forms pores in the mitochondrial membrane, resulting in release of mitochondrial DNA (mtDNA) into the cytosol (By similarity). Gasdermin-D, N-terminal released from pyroptotic cells into the extracellular milieu rapidly binds to and kills both Gram-negative and Gram-positive bacteria, without harming neighboring mammalian cells, as it does not disrupt the plasma membrane from the outside due to lipid-binding specificity (PubMed:27281216). Under cell culture conditions, also active against intracellular bacteria, such as Listeria monocytogenes (By similarity). Also active in response to MAP3K7/TAK1 inactivation by Yersinia toxin YopJ, which triggers cleavage by CASP8 and subsequent activation (By similarity). Required for mucosal tissue defense against enteric pathogens (By similarity). Activation of the non-canonical inflammasome in brain endothelial cells can lead to excessive pyroptosis, leading to blood-brain barrier breakdown (By similarity). Strongly binds to bacterial and mitochondrial lipids, including cardiolipin (PubMed:27281216). Does not bind to unphosphorylated phosphatidylinositol, phosphatidylethanolamine nor phosphatidylcholine (PubMed:27281216).</text>
</comment>
<comment type="function">
    <molecule>Gasdermin-D, p13</molecule>
    <text evidence="2">Transcription coactivator produced by the cleavage by CASP3 or CASP7 in the upper small intestine in response to dietary antigens (By similarity). Required to maintain food tolerance in small intestine: translocates to the nucleus and acts as a coactivator for STAT1 to induce the transcription of CIITA and MHC class II molecules, which in turn induce type 1 regulatory T (Tr1) cells in upper small intestine (By similarity).</text>
</comment>
<comment type="function">
    <molecule>Gasdermin-D, p40</molecule>
    <text evidence="22">Produced by the cleavage by papain allergen (PubMed:35794369). After cleavage, moves to the plasma membrane and homooligomerizes within the membrane and forms pores of 10-15 nanometers (nm) of inner diameter, allowing the specific release of mature interleukin-33 (IL33), promoting type 2 inflammatory immune response (PubMed:35794369).</text>
</comment>
<comment type="activity regulation">
    <molecule>Gasdermin-D</molecule>
    <text evidence="4 5 7 9 11 12 14 15 30 31">The full-length protein before cleavage is inactive: intramolecular interactions between N- and C-terminal domains mediate autoinhibition in the absence of activation signal (PubMed:26375003, PubMed:28928145, PubMed:29576317, PubMed:32109412). The intrinsic pyroptosis-inducing activity is carried by the released N-terminal moiety (Gasdermin-D, N-terminal) following cleavage by caspases CASP1, CASP4, CASP5 or CASP8 (PubMed:26375003, PubMed:26375259, PubMed:27418190, PubMed:29898893, PubMed:32109412). Cleavage at Asp-87 by CASP3 or CASP7 inactivates the ability to mediate pyroptosis (PubMed:28392147). Homooligomerization and pore formation is specifically inhibited by VHH(GSDMD-1) and, to a lesser extent, VHH(GSDMD-2) nanobodies, protecting against excessive pyroptosis (PubMed:38040708). Inhibited by small molecule NU6300, which covalently reacts with Cys-191, thereby preventing palmitoylation and pyroptosis (PubMed:38324683).</text>
</comment>
<comment type="subunit">
    <molecule>Gasdermin-D, N-terminal</molecule>
    <text evidence="1 2 18 19 30">Homooligomer; homooligomeric ring-shaped pore complex containing 27-28 subunits when inserted in the membrane (PubMed:33883744, PubMed:34289345, PubMed:38040708). Homooligomerization is promoted by the mTORC1 complex in macrophages (PubMed:34289345). In response to a canonical inflammasome stimulus, such as nigericin, recruited to NLRP3 inflammasone with similar kinetics to that of uncleaved CASP1 precursor (By similarity). Although this recruitment is also observed in the absence of PYCARD, it is more efficient in its presence (By similarity).</text>
</comment>
<comment type="interaction">
    <interactant intactId="EBI-2798865">
        <id>P57764</id>
    </interactant>
    <interactant intactId="EBI-19946665">
        <id>Q86U10</id>
        <label>ASPG</label>
    </interactant>
    <organismsDiffer>false</organismsDiffer>
    <experiments>3</experiments>
</comment>
<comment type="interaction">
    <interactant intactId="EBI-2798865">
        <id>P57764</id>
    </interactant>
    <interactant intactId="EBI-516667">
        <id>P29466</id>
        <label>CASP1</label>
    </interactant>
    <organismsDiffer>false</organismsDiffer>
    <experiments>4</experiments>
</comment>
<comment type="interaction">
    <interactant intactId="EBI-2798865">
        <id>P57764</id>
    </interactant>
    <interactant intactId="EBI-2511344">
        <id>Q8NC69</id>
        <label>KCTD6</label>
    </interactant>
    <organismsDiffer>false</organismsDiffer>
    <experiments>7</experiments>
</comment>
<comment type="interaction">
    <interactant intactId="EBI-2798865">
        <id>P57764</id>
    </interactant>
    <interactant intactId="EBI-16439278">
        <id>Q6FHY5</id>
        <label>MEOX2</label>
    </interactant>
    <organismsDiffer>false</organismsDiffer>
    <experiments>3</experiments>
</comment>
<comment type="interaction">
    <interactant intactId="EBI-2798865">
        <id>P57764</id>
    </interactant>
    <interactant intactId="EBI-359352">
        <id>P25786</id>
        <label>PSMA1</label>
    </interactant>
    <organismsDiffer>false</organismsDiffer>
    <experiments>3</experiments>
</comment>
<comment type="interaction">
    <interactant intactId="EBI-2798865">
        <id>P57764</id>
    </interactant>
    <interactant intactId="EBI-2515625">
        <id>Q86T24</id>
        <label>ZBTB33</label>
    </interactant>
    <organismsDiffer>false</organismsDiffer>
    <experiments>3</experiments>
</comment>
<comment type="interaction">
    <interactant intactId="EBI-2798865">
        <id>P57764</id>
    </interactant>
    <interactant intactId="EBI-743265">
        <id>Q9BUY5</id>
        <label>ZNF426</label>
    </interactant>
    <organismsDiffer>false</organismsDiffer>
    <experiments>3</experiments>
</comment>
<comment type="interaction">
    <interactant intactId="EBI-2798865">
        <id>P57764</id>
    </interactant>
    <interactant intactId="EBI-373363">
        <id>Q96NG5</id>
        <label>ZNF558</label>
    </interactant>
    <organismsDiffer>false</organismsDiffer>
    <experiments>3</experiments>
</comment>
<comment type="interaction">
    <interactant intactId="EBI-2798865">
        <id>P57764</id>
    </interactant>
    <interactant intactId="EBI-25475856">
        <id>P0DTC9</id>
        <label>N</label>
    </interactant>
    <organismsDiffer>true</organismsDiffer>
    <experiments>13</experiments>
</comment>
<comment type="subcellular location">
    <molecule>Gasdermin-D</molecule>
    <subcellularLocation>
        <location evidence="6">Cytoplasm</location>
        <location evidence="6">Cytosol</location>
    </subcellularLocation>
    <subcellularLocation>
        <location evidence="2">Inflammasome</location>
    </subcellularLocation>
    <text evidence="2">In response to a canonical inflammasome stimulus, such as nigericin, recruited to NLRP3 inflammasone with similar kinetics to that of uncleaved CASP1 precursor.</text>
</comment>
<comment type="subcellular location">
    <molecule>Gasdermin-D, N-terminal</molecule>
    <subcellularLocation>
        <location evidence="6 15 18 23 32 33">Cell membrane</location>
        <topology evidence="18 43">Multi-pass membrane protein</topology>
    </subcellularLocation>
    <subcellularLocation>
        <location evidence="2">Secreted</location>
    </subcellularLocation>
    <subcellularLocation>
        <location evidence="2">Mitochondrion membrane</location>
    </subcellularLocation>
    <text evidence="2">Released in the extracellular milieu following pyroptosis.</text>
</comment>
<comment type="subcellular location">
    <molecule>Gasdermin-D, N-terminal</molecule>
    <subcellularLocation>
        <location evidence="23">Cytoplasm</location>
        <location evidence="23">Cytosol</location>
    </subcellularLocation>
    <text evidence="23">(Microbial infection) Upon infection by M.tuberculosis, localization to cell membrane is prevented by M.tuberculosis phosphatase PtpB that catalyzes dephosphorylation of phosphatidylinositol (4,5)-bisphosphate and phosphatidylinositol 4-phosphate, thereby inhibiting the membrane targeting of Gasdermin-D, N-terminal and subsequent cytokine release and pyroptosis.</text>
</comment>
<comment type="subcellular location">
    <molecule>Gasdermin-D, p13</molecule>
    <subcellularLocation>
        <location evidence="2">Nucleus</location>
    </subcellularLocation>
</comment>
<comment type="subcellular location">
    <molecule>Gasdermin-D, C-terminal</molecule>
    <subcellularLocation>
        <location evidence="2">Cytoplasm</location>
        <location evidence="2">Cytosol</location>
    </subcellularLocation>
</comment>
<comment type="tissue specificity">
    <text evidence="3">Expressed in the suprabasal cells of esophagus, as well as in the isthmus/neck, pit, and gland of the stomach, suggesting preferential expression in differentiating cells.</text>
</comment>
<comment type="domain">
    <text evidence="4 11 12 14">Intramolecular interactions between N- and C-terminal domains mediate autoinhibition in the absence of cleavage by inflammatory caspases CASP1, CASP4 or CASP5 (PubMed:26375003, PubMed:28928145, PubMed:29576317, PubMed:29898893). The linker helix loop inserts into the N-terminal domain (PubMed:28928145). The intrinsic pyroptosis-inducing activity is carried by Gasdermin-D, N-terminal, that is released upon cleavage by inflammatory caspases (PubMed:26375003).</text>
</comment>
<comment type="domain">
    <molecule>Gasdermin-D, N-terminal</molecule>
    <text evidence="18">Forms a ring-shaped pore complex containing 27-28 subunits that inserts into the membrane (PubMed:33883744). The pore conduit is predominantly negatively charged, facilitating the release of mature interleukin-1 (IL1B and IL18) (PubMed:33883744). In contrast interleukin-1 precursors are not released, due to the presence of an acidic region that is proteolytically removed by CASP1 during maturation (PubMed:33883744).</text>
</comment>
<comment type="PTM">
    <text evidence="2 4 8 9 14 15 22 28">Cleavage at Asp-275 by CASP1 (mature and uncleaved precursor forms), CASP4, CASP5 or CASP8 relieves autoinhibition and is sufficient to initiate pyroptosis (PubMed:26375003, PubMed:29898893, PubMed:32109412). Cleavage by CASP1 and CASP4 is not strictly dependent on the consensus cleavage site on GSDMD but depends on an exosite interface on CASP1 that recognizes and binds the Gasdermin-D, C-terminal (GSDMD-CT) part (PubMed:32109412). Cleavage by CASP8 takes place following inactivation of MAP3K7/TAK1 by Yersinia toxin YopJ (By similarity). Cleavage at Asp-87 by CASP3 or CASP7 inactivates the ability to mediate pyroptosis, but generates the Gasdermin-D, p13 chain, which translocates to the nucleus and acts as a transcription regulator (PubMed:28045099, PubMed:28392147, PubMed:37327784). Cleavage by papain allergen generates the Gasdermin-D, p40 chain (PubMed:35794369).</text>
</comment>
<comment type="PTM">
    <molecule>Gasdermin-D</molecule>
    <text evidence="2 31 32 33">Palmitoylated at Cys-191 by ZDHHC5 and ZDHHC9 in response to microbial infection and danger signals (PubMed:38324683, PubMed:38530158, PubMed:38599239). Palmitoylation takes place before cleavage by caspases (CASP1, CASP4, CASP5 or CASP8) and is required for membrane translocation and pore formation (PubMed:38324683, PubMed:38530158, PubMed:38599239). Depalmitoylated by LYPLA2 (By similarity).</text>
</comment>
<comment type="PTM">
    <molecule>Gasdermin-D</molecule>
    <text evidence="16">Succination of Cys-191 by the Krebs cycle intermediate fumarate, which leads to S-(2-succinyl)cysteine residues, inhibits processing by caspases, and ability to initiate pyroptosis (PubMed:32820063). Succination modification is catalyzed by a non-enzymatic reaction caused by an accumulation of fumarate (PubMed:32820063).</text>
</comment>
<comment type="PTM">
    <text evidence="29">Glycosylated: O-GlcNAcylation by OGT leads to reduced cleavage by CASP4 and decreased LPS-induced endothelial cell pyroptosis.</text>
</comment>
<comment type="PTM">
    <text evidence="10">(Microbial infection) Cleaved and inactivated by Protease 3C from Human enterovirus 71 (EV71), preventing GSDMD-mediated pyroptosis.</text>
</comment>
<comment type="PTM">
    <text evidence="21">(Microbial infection) Cleaved and inactivated by the 3C-like proteinase nsp5 from human coronavirus SARS-CoV-2, preventing GSDMD-mediated pyroptosis.</text>
</comment>
<comment type="PTM">
    <text evidence="20 24 25 26">(Microbial infection) Ubiquitinated by S.flexneri IpaH7.8, leading to its degradation by the proteasome.</text>
</comment>
<comment type="similarity">
    <text evidence="41">Belongs to the gasdermin family.</text>
</comment>
<protein>
    <recommendedName>
        <fullName evidence="36">Gasdermin-D</fullName>
    </recommendedName>
    <alternativeName>
        <fullName evidence="34">Gasdermin domain-containing protein 1</fullName>
    </alternativeName>
    <component>
        <recommendedName>
            <fullName evidence="41">Gasdermin-D, N-terminal</fullName>
            <shortName evidence="2">GSDMD-NT</shortName>
            <shortName evidence="37">hGSDMD-NTD</shortName>
        </recommendedName>
    </component>
    <component>
        <recommendedName>
            <fullName evidence="41">Gasdermin-D, C-terminal</fullName>
            <shortName evidence="2">GSDMD-CT</shortName>
            <shortName evidence="37">hGSDMD-CTD</shortName>
        </recommendedName>
    </component>
    <component>
        <recommendedName>
            <fullName evidence="41">Gasdermin-D, p13</fullName>
        </recommendedName>
        <alternativeName>
            <fullName evidence="39">Gasdermin-D, 13 kDa</fullName>
            <shortName evidence="39">13 kDa GSDMD</shortName>
        </alternativeName>
    </component>
    <component>
        <recommendedName>
            <fullName evidence="38">Gasdermin-D, p40</fullName>
        </recommendedName>
    </component>
</protein>